<keyword id="KW-0002">3D-structure</keyword>
<keyword id="KW-0903">Direct protein sequencing</keyword>
<keyword id="KW-0479">Metal-binding</keyword>
<keyword id="KW-1185">Reference proteome</keyword>
<keyword id="KW-0687">Ribonucleoprotein</keyword>
<keyword id="KW-0689">Ribosomal protein</keyword>
<keyword id="KW-0694">RNA-binding</keyword>
<keyword id="KW-0699">rRNA-binding</keyword>
<keyword id="KW-0862">Zinc</keyword>
<evidence type="ECO:0000250" key="1"/>
<evidence type="ECO:0000269" key="2">
    <source>
    </source>
</evidence>
<evidence type="ECO:0000269" key="3">
    <source>
    </source>
</evidence>
<evidence type="ECO:0000269" key="4">
    <source>
    </source>
</evidence>
<evidence type="ECO:0000269" key="5">
    <source>
    </source>
</evidence>
<evidence type="ECO:0000269" key="6">
    <source>
    </source>
</evidence>
<evidence type="ECO:0000305" key="7"/>
<evidence type="ECO:0007829" key="8">
    <source>
        <dbReference type="PDB" id="1FJG"/>
    </source>
</evidence>
<evidence type="ECO:0007829" key="9">
    <source>
        <dbReference type="PDB" id="2UUB"/>
    </source>
</evidence>
<evidence type="ECO:0007829" key="10">
    <source>
        <dbReference type="PDB" id="2UXB"/>
    </source>
</evidence>
<evidence type="ECO:0007829" key="11">
    <source>
        <dbReference type="PDB" id="2VQE"/>
    </source>
</evidence>
<evidence type="ECO:0007829" key="12">
    <source>
        <dbReference type="PDB" id="3T1Y"/>
    </source>
</evidence>
<protein>
    <recommendedName>
        <fullName evidence="7">Small ribosomal subunit protein uS14</fullName>
    </recommendedName>
    <alternativeName>
        <fullName>30S ribosomal protein S14 type Z</fullName>
    </alternativeName>
</protein>
<name>RS14Z_THET8</name>
<dbReference type="EMBL" id="S78490">
    <property type="protein sequence ID" value="AAB34721.1"/>
    <property type="molecule type" value="Genomic_DNA"/>
</dbReference>
<dbReference type="EMBL" id="AP008226">
    <property type="protein sequence ID" value="BAD71502.1"/>
    <property type="molecule type" value="Genomic_DNA"/>
</dbReference>
<dbReference type="RefSeq" id="WP_008633399.1">
    <property type="nucleotide sequence ID" value="NC_006461.1"/>
</dbReference>
<dbReference type="RefSeq" id="YP_144945.1">
    <property type="nucleotide sequence ID" value="NC_006461.1"/>
</dbReference>
<dbReference type="PDB" id="1FJG">
    <property type="method" value="X-ray"/>
    <property type="resolution" value="3.00 A"/>
    <property type="chains" value="N=1-61"/>
</dbReference>
<dbReference type="PDB" id="1HNW">
    <property type="method" value="X-ray"/>
    <property type="resolution" value="3.40 A"/>
    <property type="chains" value="N=1-61"/>
</dbReference>
<dbReference type="PDB" id="1HNX">
    <property type="method" value="X-ray"/>
    <property type="resolution" value="3.40 A"/>
    <property type="chains" value="N=1-61"/>
</dbReference>
<dbReference type="PDB" id="1HNZ">
    <property type="method" value="X-ray"/>
    <property type="resolution" value="3.30 A"/>
    <property type="chains" value="N=1-61"/>
</dbReference>
<dbReference type="PDB" id="1HR0">
    <property type="method" value="X-ray"/>
    <property type="resolution" value="3.20 A"/>
    <property type="chains" value="N=1-61"/>
</dbReference>
<dbReference type="PDB" id="1I94">
    <property type="method" value="X-ray"/>
    <property type="resolution" value="3.20 A"/>
    <property type="chains" value="N=2-61"/>
</dbReference>
<dbReference type="PDB" id="1I95">
    <property type="method" value="X-ray"/>
    <property type="resolution" value="4.50 A"/>
    <property type="chains" value="N=2-61"/>
</dbReference>
<dbReference type="PDB" id="1I96">
    <property type="method" value="X-ray"/>
    <property type="resolution" value="4.20 A"/>
    <property type="chains" value="N=2-61"/>
</dbReference>
<dbReference type="PDB" id="1I97">
    <property type="method" value="X-ray"/>
    <property type="resolution" value="4.50 A"/>
    <property type="chains" value="N=2-61"/>
</dbReference>
<dbReference type="PDB" id="1IBK">
    <property type="method" value="X-ray"/>
    <property type="resolution" value="3.31 A"/>
    <property type="chains" value="N=1-61"/>
</dbReference>
<dbReference type="PDB" id="1IBL">
    <property type="method" value="X-ray"/>
    <property type="resolution" value="3.11 A"/>
    <property type="chains" value="N=1-61"/>
</dbReference>
<dbReference type="PDB" id="1IBM">
    <property type="method" value="X-ray"/>
    <property type="resolution" value="3.31 A"/>
    <property type="chains" value="N=1-61"/>
</dbReference>
<dbReference type="PDB" id="1J5E">
    <property type="method" value="X-ray"/>
    <property type="resolution" value="3.05 A"/>
    <property type="chains" value="N=2-61"/>
</dbReference>
<dbReference type="PDB" id="1JGO">
    <property type="method" value="X-ray"/>
    <property type="resolution" value="5.60 A"/>
    <property type="chains" value="Q=1-61"/>
</dbReference>
<dbReference type="PDB" id="1JGP">
    <property type="method" value="X-ray"/>
    <property type="resolution" value="7.00 A"/>
    <property type="chains" value="Q=1-61"/>
</dbReference>
<dbReference type="PDB" id="1JGQ">
    <property type="method" value="X-ray"/>
    <property type="resolution" value="5.00 A"/>
    <property type="chains" value="Q=1-61"/>
</dbReference>
<dbReference type="PDB" id="1ML5">
    <property type="method" value="EM"/>
    <property type="resolution" value="14.00 A"/>
    <property type="chains" value="Q=1-61"/>
</dbReference>
<dbReference type="PDB" id="1N32">
    <property type="method" value="X-ray"/>
    <property type="resolution" value="3.00 A"/>
    <property type="chains" value="N=2-61"/>
</dbReference>
<dbReference type="PDB" id="1N33">
    <property type="method" value="X-ray"/>
    <property type="resolution" value="3.35 A"/>
    <property type="chains" value="N=2-61"/>
</dbReference>
<dbReference type="PDB" id="1N34">
    <property type="method" value="X-ray"/>
    <property type="resolution" value="3.80 A"/>
    <property type="chains" value="N=2-61"/>
</dbReference>
<dbReference type="PDB" id="1N36">
    <property type="method" value="X-ray"/>
    <property type="resolution" value="3.65 A"/>
    <property type="chains" value="N=2-61"/>
</dbReference>
<dbReference type="PDB" id="1VVJ">
    <property type="method" value="X-ray"/>
    <property type="resolution" value="3.44 A"/>
    <property type="chains" value="QN/XN=1-61"/>
</dbReference>
<dbReference type="PDB" id="1VY4">
    <property type="method" value="X-ray"/>
    <property type="resolution" value="2.60 A"/>
    <property type="chains" value="AN/CN=1-61"/>
</dbReference>
<dbReference type="PDB" id="1VY5">
    <property type="method" value="X-ray"/>
    <property type="resolution" value="2.55 A"/>
    <property type="chains" value="AN/CN=1-61"/>
</dbReference>
<dbReference type="PDB" id="1VY6">
    <property type="method" value="X-ray"/>
    <property type="resolution" value="2.90 A"/>
    <property type="chains" value="AN/CN=1-61"/>
</dbReference>
<dbReference type="PDB" id="1VY7">
    <property type="method" value="X-ray"/>
    <property type="resolution" value="2.80 A"/>
    <property type="chains" value="AN/CN=1-61"/>
</dbReference>
<dbReference type="PDB" id="1XMO">
    <property type="method" value="X-ray"/>
    <property type="resolution" value="3.25 A"/>
    <property type="chains" value="N=1-61"/>
</dbReference>
<dbReference type="PDB" id="1XMQ">
    <property type="method" value="X-ray"/>
    <property type="resolution" value="3.00 A"/>
    <property type="chains" value="N=1-61"/>
</dbReference>
<dbReference type="PDB" id="1XNQ">
    <property type="method" value="X-ray"/>
    <property type="resolution" value="3.05 A"/>
    <property type="chains" value="N=1-61"/>
</dbReference>
<dbReference type="PDB" id="1XNR">
    <property type="method" value="X-ray"/>
    <property type="resolution" value="3.10 A"/>
    <property type="chains" value="N=1-61"/>
</dbReference>
<dbReference type="PDB" id="2E5L">
    <property type="method" value="X-ray"/>
    <property type="resolution" value="3.30 A"/>
    <property type="chains" value="N=2-61"/>
</dbReference>
<dbReference type="PDB" id="2F4V">
    <property type="method" value="X-ray"/>
    <property type="resolution" value="3.80 A"/>
    <property type="chains" value="N=1-61"/>
</dbReference>
<dbReference type="PDB" id="2HHH">
    <property type="method" value="X-ray"/>
    <property type="resolution" value="3.35 A"/>
    <property type="chains" value="N=1-61"/>
</dbReference>
<dbReference type="PDB" id="2UU9">
    <property type="method" value="X-ray"/>
    <property type="resolution" value="3.10 A"/>
    <property type="chains" value="N=2-61"/>
</dbReference>
<dbReference type="PDB" id="2UUA">
    <property type="method" value="X-ray"/>
    <property type="resolution" value="2.90 A"/>
    <property type="chains" value="N=2-61"/>
</dbReference>
<dbReference type="PDB" id="2UUB">
    <property type="method" value="X-ray"/>
    <property type="resolution" value="2.80 A"/>
    <property type="chains" value="N=2-61"/>
</dbReference>
<dbReference type="PDB" id="2UUC">
    <property type="method" value="X-ray"/>
    <property type="resolution" value="3.10 A"/>
    <property type="chains" value="N=2-61"/>
</dbReference>
<dbReference type="PDB" id="2UXB">
    <property type="method" value="X-ray"/>
    <property type="resolution" value="3.10 A"/>
    <property type="chains" value="N=2-61"/>
</dbReference>
<dbReference type="PDB" id="2UXC">
    <property type="method" value="X-ray"/>
    <property type="resolution" value="2.90 A"/>
    <property type="chains" value="N=2-61"/>
</dbReference>
<dbReference type="PDB" id="2UXD">
    <property type="method" value="X-ray"/>
    <property type="resolution" value="3.20 A"/>
    <property type="chains" value="N=2-61"/>
</dbReference>
<dbReference type="PDB" id="2VQE">
    <property type="method" value="X-ray"/>
    <property type="resolution" value="2.50 A"/>
    <property type="chains" value="N=1-61"/>
</dbReference>
<dbReference type="PDB" id="2VQF">
    <property type="method" value="X-ray"/>
    <property type="resolution" value="2.90 A"/>
    <property type="chains" value="N=1-61"/>
</dbReference>
<dbReference type="PDB" id="2ZM6">
    <property type="method" value="X-ray"/>
    <property type="resolution" value="3.30 A"/>
    <property type="chains" value="N=2-61"/>
</dbReference>
<dbReference type="PDB" id="3OTO">
    <property type="method" value="X-ray"/>
    <property type="resolution" value="3.69 A"/>
    <property type="chains" value="N=1-61"/>
</dbReference>
<dbReference type="PDB" id="3T1H">
    <property type="method" value="X-ray"/>
    <property type="resolution" value="3.11 A"/>
    <property type="chains" value="N=1-61"/>
</dbReference>
<dbReference type="PDB" id="3T1Y">
    <property type="method" value="X-ray"/>
    <property type="resolution" value="2.80 A"/>
    <property type="chains" value="N=1-61"/>
</dbReference>
<dbReference type="PDB" id="4AQY">
    <property type="method" value="X-ray"/>
    <property type="resolution" value="3.50 A"/>
    <property type="chains" value="N=2-61"/>
</dbReference>
<dbReference type="PDB" id="4B3M">
    <property type="method" value="X-ray"/>
    <property type="resolution" value="2.90 A"/>
    <property type="chains" value="N=2-61"/>
</dbReference>
<dbReference type="PDB" id="4B3R">
    <property type="method" value="X-ray"/>
    <property type="resolution" value="3.00 A"/>
    <property type="chains" value="N=2-61"/>
</dbReference>
<dbReference type="PDB" id="4B3S">
    <property type="method" value="X-ray"/>
    <property type="resolution" value="3.15 A"/>
    <property type="chains" value="N=2-61"/>
</dbReference>
<dbReference type="PDB" id="4B3T">
    <property type="method" value="X-ray"/>
    <property type="resolution" value="3.00 A"/>
    <property type="chains" value="N=2-61"/>
</dbReference>
<dbReference type="PDB" id="4DR1">
    <property type="method" value="X-ray"/>
    <property type="resolution" value="3.60 A"/>
    <property type="chains" value="N=1-61"/>
</dbReference>
<dbReference type="PDB" id="4DR2">
    <property type="method" value="X-ray"/>
    <property type="resolution" value="3.25 A"/>
    <property type="chains" value="N=1-61"/>
</dbReference>
<dbReference type="PDB" id="4DR3">
    <property type="method" value="X-ray"/>
    <property type="resolution" value="3.35 A"/>
    <property type="chains" value="N=1-61"/>
</dbReference>
<dbReference type="PDB" id="4DR4">
    <property type="method" value="X-ray"/>
    <property type="resolution" value="3.97 A"/>
    <property type="chains" value="N=1-61"/>
</dbReference>
<dbReference type="PDB" id="4DR5">
    <property type="method" value="X-ray"/>
    <property type="resolution" value="3.45 A"/>
    <property type="chains" value="N=1-61"/>
</dbReference>
<dbReference type="PDB" id="4DR6">
    <property type="method" value="X-ray"/>
    <property type="resolution" value="3.30 A"/>
    <property type="chains" value="N=1-61"/>
</dbReference>
<dbReference type="PDB" id="4DR7">
    <property type="method" value="X-ray"/>
    <property type="resolution" value="3.75 A"/>
    <property type="chains" value="N=1-61"/>
</dbReference>
<dbReference type="PDB" id="4DUY">
    <property type="method" value="X-ray"/>
    <property type="resolution" value="3.39 A"/>
    <property type="chains" value="N=1-61"/>
</dbReference>
<dbReference type="PDB" id="4DUZ">
    <property type="method" value="X-ray"/>
    <property type="resolution" value="3.65 A"/>
    <property type="chains" value="N=1-61"/>
</dbReference>
<dbReference type="PDB" id="4DV0">
    <property type="method" value="X-ray"/>
    <property type="resolution" value="3.85 A"/>
    <property type="chains" value="N=1-61"/>
</dbReference>
<dbReference type="PDB" id="4DV1">
    <property type="method" value="X-ray"/>
    <property type="resolution" value="3.85 A"/>
    <property type="chains" value="N=1-61"/>
</dbReference>
<dbReference type="PDB" id="4DV2">
    <property type="method" value="X-ray"/>
    <property type="resolution" value="3.65 A"/>
    <property type="chains" value="N=1-61"/>
</dbReference>
<dbReference type="PDB" id="4DV3">
    <property type="method" value="X-ray"/>
    <property type="resolution" value="3.55 A"/>
    <property type="chains" value="N=1-61"/>
</dbReference>
<dbReference type="PDB" id="4DV4">
    <property type="method" value="X-ray"/>
    <property type="resolution" value="3.65 A"/>
    <property type="chains" value="N=1-61"/>
</dbReference>
<dbReference type="PDB" id="4DV5">
    <property type="method" value="X-ray"/>
    <property type="resolution" value="3.68 A"/>
    <property type="chains" value="N=1-61"/>
</dbReference>
<dbReference type="PDB" id="4DV6">
    <property type="method" value="X-ray"/>
    <property type="resolution" value="3.30 A"/>
    <property type="chains" value="N=1-61"/>
</dbReference>
<dbReference type="PDB" id="4DV7">
    <property type="method" value="X-ray"/>
    <property type="resolution" value="3.29 A"/>
    <property type="chains" value="N=1-61"/>
</dbReference>
<dbReference type="PDB" id="4GKJ">
    <property type="method" value="X-ray"/>
    <property type="resolution" value="3.30 A"/>
    <property type="chains" value="N=2-61"/>
</dbReference>
<dbReference type="PDB" id="4GKK">
    <property type="method" value="X-ray"/>
    <property type="resolution" value="3.20 A"/>
    <property type="chains" value="N=2-61"/>
</dbReference>
<dbReference type="PDB" id="4JI0">
    <property type="method" value="X-ray"/>
    <property type="resolution" value="3.49 A"/>
    <property type="chains" value="N=1-61"/>
</dbReference>
<dbReference type="PDB" id="4JI1">
    <property type="method" value="X-ray"/>
    <property type="resolution" value="3.14 A"/>
    <property type="chains" value="N=1-61"/>
</dbReference>
<dbReference type="PDB" id="4JI2">
    <property type="method" value="X-ray"/>
    <property type="resolution" value="3.64 A"/>
    <property type="chains" value="N=1-61"/>
</dbReference>
<dbReference type="PDB" id="4JI3">
    <property type="method" value="X-ray"/>
    <property type="resolution" value="3.35 A"/>
    <property type="chains" value="N=1-61"/>
</dbReference>
<dbReference type="PDB" id="4JI4">
    <property type="method" value="X-ray"/>
    <property type="resolution" value="3.69 A"/>
    <property type="chains" value="N=1-61"/>
</dbReference>
<dbReference type="PDB" id="4JI5">
    <property type="method" value="X-ray"/>
    <property type="resolution" value="3.85 A"/>
    <property type="chains" value="N=1-61"/>
</dbReference>
<dbReference type="PDB" id="4JI6">
    <property type="method" value="X-ray"/>
    <property type="resolution" value="3.55 A"/>
    <property type="chains" value="N=1-61"/>
</dbReference>
<dbReference type="PDB" id="4JI7">
    <property type="method" value="X-ray"/>
    <property type="resolution" value="3.50 A"/>
    <property type="chains" value="N=1-61"/>
</dbReference>
<dbReference type="PDB" id="4JI8">
    <property type="method" value="X-ray"/>
    <property type="resolution" value="3.74 A"/>
    <property type="chains" value="N=1-61"/>
</dbReference>
<dbReference type="PDB" id="4JV5">
    <property type="method" value="X-ray"/>
    <property type="resolution" value="3.16 A"/>
    <property type="chains" value="N=2-61"/>
</dbReference>
<dbReference type="PDB" id="4JYA">
    <property type="method" value="X-ray"/>
    <property type="resolution" value="3.10 A"/>
    <property type="chains" value="N=2-61"/>
</dbReference>
<dbReference type="PDB" id="4K0K">
    <property type="method" value="X-ray"/>
    <property type="resolution" value="3.40 A"/>
    <property type="chains" value="N=2-61"/>
</dbReference>
<dbReference type="PDB" id="4KHP">
    <property type="method" value="X-ray"/>
    <property type="resolution" value="3.10 A"/>
    <property type="chains" value="N=2-61"/>
</dbReference>
<dbReference type="PDB" id="4L47">
    <property type="method" value="X-ray"/>
    <property type="resolution" value="3.22 A"/>
    <property type="chains" value="QN/XN=1-61"/>
</dbReference>
<dbReference type="PDB" id="4L71">
    <property type="method" value="X-ray"/>
    <property type="resolution" value="3.90 A"/>
    <property type="chains" value="QN/XN=1-61"/>
</dbReference>
<dbReference type="PDB" id="4LEL">
    <property type="method" value="X-ray"/>
    <property type="resolution" value="3.90 A"/>
    <property type="chains" value="QN/XN=1-61"/>
</dbReference>
<dbReference type="PDB" id="4LF4">
    <property type="method" value="X-ray"/>
    <property type="resolution" value="3.34 A"/>
    <property type="chains" value="N=1-61"/>
</dbReference>
<dbReference type="PDB" id="4LF5">
    <property type="method" value="X-ray"/>
    <property type="resolution" value="3.75 A"/>
    <property type="chains" value="N=1-61"/>
</dbReference>
<dbReference type="PDB" id="4LF6">
    <property type="method" value="X-ray"/>
    <property type="resolution" value="3.31 A"/>
    <property type="chains" value="N=1-61"/>
</dbReference>
<dbReference type="PDB" id="4LF7">
    <property type="method" value="X-ray"/>
    <property type="resolution" value="3.15 A"/>
    <property type="chains" value="N=1-61"/>
</dbReference>
<dbReference type="PDB" id="4LF8">
    <property type="method" value="X-ray"/>
    <property type="resolution" value="3.15 A"/>
    <property type="chains" value="N=1-61"/>
</dbReference>
<dbReference type="PDB" id="4LF9">
    <property type="method" value="X-ray"/>
    <property type="resolution" value="3.28 A"/>
    <property type="chains" value="N=1-61"/>
</dbReference>
<dbReference type="PDB" id="4LFA">
    <property type="method" value="X-ray"/>
    <property type="resolution" value="3.65 A"/>
    <property type="chains" value="N=1-61"/>
</dbReference>
<dbReference type="PDB" id="4LFB">
    <property type="method" value="X-ray"/>
    <property type="resolution" value="3.01 A"/>
    <property type="chains" value="N=1-61"/>
</dbReference>
<dbReference type="PDB" id="4LFC">
    <property type="method" value="X-ray"/>
    <property type="resolution" value="3.60 A"/>
    <property type="chains" value="N=1-61"/>
</dbReference>
<dbReference type="PDB" id="4LFZ">
    <property type="method" value="X-ray"/>
    <property type="resolution" value="3.92 A"/>
    <property type="chains" value="QN/XN=1-61"/>
</dbReference>
<dbReference type="PDB" id="4LNT">
    <property type="method" value="X-ray"/>
    <property type="resolution" value="2.94 A"/>
    <property type="chains" value="QN/XN=1-61"/>
</dbReference>
<dbReference type="PDB" id="4LSK">
    <property type="method" value="X-ray"/>
    <property type="resolution" value="3.48 A"/>
    <property type="chains" value="QN/XN=1-61"/>
</dbReference>
<dbReference type="PDB" id="4LT8">
    <property type="method" value="X-ray"/>
    <property type="resolution" value="3.14 A"/>
    <property type="chains" value="QN/XN=1-61"/>
</dbReference>
<dbReference type="PDB" id="4NXM">
    <property type="method" value="X-ray"/>
    <property type="resolution" value="3.65 A"/>
    <property type="chains" value="N=1-61"/>
</dbReference>
<dbReference type="PDB" id="4NXN">
    <property type="method" value="X-ray"/>
    <property type="resolution" value="3.54 A"/>
    <property type="chains" value="N=1-61"/>
</dbReference>
<dbReference type="PDB" id="4OX9">
    <property type="method" value="X-ray"/>
    <property type="resolution" value="3.80 A"/>
    <property type="chains" value="N=2-61"/>
</dbReference>
<dbReference type="PDB" id="4P6F">
    <property type="method" value="X-ray"/>
    <property type="resolution" value="3.60 A"/>
    <property type="chains" value="QN/XN=1-61"/>
</dbReference>
<dbReference type="PDB" id="4P70">
    <property type="method" value="X-ray"/>
    <property type="resolution" value="3.68 A"/>
    <property type="chains" value="QN/XN=1-61"/>
</dbReference>
<dbReference type="PDB" id="4TUA">
    <property type="method" value="X-ray"/>
    <property type="resolution" value="3.60 A"/>
    <property type="chains" value="QN/XN=1-61"/>
</dbReference>
<dbReference type="PDB" id="4TUB">
    <property type="method" value="X-ray"/>
    <property type="resolution" value="3.60 A"/>
    <property type="chains" value="QN/XN=1-61"/>
</dbReference>
<dbReference type="PDB" id="4TUC">
    <property type="method" value="X-ray"/>
    <property type="resolution" value="3.60 A"/>
    <property type="chains" value="QN/XN=1-61"/>
</dbReference>
<dbReference type="PDB" id="4TUD">
    <property type="method" value="X-ray"/>
    <property type="resolution" value="3.60 A"/>
    <property type="chains" value="QN/XN=1-61"/>
</dbReference>
<dbReference type="PDB" id="4TUE">
    <property type="method" value="X-ray"/>
    <property type="resolution" value="3.50 A"/>
    <property type="chains" value="QN/XN=1-61"/>
</dbReference>
<dbReference type="PDB" id="4V42">
    <property type="method" value="X-ray"/>
    <property type="resolution" value="5.50 A"/>
    <property type="chains" value="AQ=1-61"/>
</dbReference>
<dbReference type="PDB" id="4V49">
    <property type="method" value="X-ray"/>
    <property type="resolution" value="8.70 A"/>
    <property type="chains" value="N=2-61"/>
</dbReference>
<dbReference type="PDB" id="4V4A">
    <property type="method" value="X-ray"/>
    <property type="resolution" value="9.50 A"/>
    <property type="chains" value="N=2-61"/>
</dbReference>
<dbReference type="PDB" id="4V4I">
    <property type="method" value="X-ray"/>
    <property type="resolution" value="3.71 A"/>
    <property type="chains" value="o=-"/>
</dbReference>
<dbReference type="PDB" id="4V4P">
    <property type="method" value="X-ray"/>
    <property type="resolution" value="5.50 A"/>
    <property type="chains" value="BQ=1-61"/>
</dbReference>
<dbReference type="PDB" id="4V4R">
    <property type="method" value="X-ray"/>
    <property type="resolution" value="5.90 A"/>
    <property type="chains" value="AN=1-61"/>
</dbReference>
<dbReference type="PDB" id="4V4S">
    <property type="method" value="X-ray"/>
    <property type="resolution" value="6.76 A"/>
    <property type="chains" value="AN=1-61"/>
</dbReference>
<dbReference type="PDB" id="4V4T">
    <property type="method" value="X-ray"/>
    <property type="resolution" value="6.46 A"/>
    <property type="chains" value="AN=1-61"/>
</dbReference>
<dbReference type="PDB" id="4V4X">
    <property type="method" value="X-ray"/>
    <property type="resolution" value="5.00 A"/>
    <property type="chains" value="AQ=1-61"/>
</dbReference>
<dbReference type="PDB" id="4V4Y">
    <property type="method" value="X-ray"/>
    <property type="resolution" value="5.50 A"/>
    <property type="chains" value="AQ=1-61"/>
</dbReference>
<dbReference type="PDB" id="4V4Z">
    <property type="method" value="X-ray"/>
    <property type="resolution" value="4.51 A"/>
    <property type="chains" value="AQ=1-61"/>
</dbReference>
<dbReference type="PDB" id="4V51">
    <property type="method" value="X-ray"/>
    <property type="resolution" value="2.80 A"/>
    <property type="chains" value="AN/CN=2-61"/>
</dbReference>
<dbReference type="PDB" id="4V5A">
    <property type="method" value="X-ray"/>
    <property type="resolution" value="3.50 A"/>
    <property type="chains" value="AN/CN=2-61"/>
</dbReference>
<dbReference type="PDB" id="4V5C">
    <property type="method" value="X-ray"/>
    <property type="resolution" value="3.30 A"/>
    <property type="chains" value="AN/CN=1-61"/>
</dbReference>
<dbReference type="PDB" id="4V5D">
    <property type="method" value="X-ray"/>
    <property type="resolution" value="3.50 A"/>
    <property type="chains" value="AN/CN=1-61"/>
</dbReference>
<dbReference type="PDB" id="4V5E">
    <property type="method" value="X-ray"/>
    <property type="resolution" value="3.45 A"/>
    <property type="chains" value="AN/CN=1-61"/>
</dbReference>
<dbReference type="PDB" id="4V5F">
    <property type="method" value="X-ray"/>
    <property type="resolution" value="3.60 A"/>
    <property type="chains" value="AN/CN=1-61"/>
</dbReference>
<dbReference type="PDB" id="4V5G">
    <property type="method" value="X-ray"/>
    <property type="resolution" value="3.60 A"/>
    <property type="chains" value="AN/CN=1-61"/>
</dbReference>
<dbReference type="PDB" id="4V5J">
    <property type="method" value="X-ray"/>
    <property type="resolution" value="3.10 A"/>
    <property type="chains" value="AN/CN=1-61"/>
</dbReference>
<dbReference type="PDB" id="4V5K">
    <property type="method" value="X-ray"/>
    <property type="resolution" value="3.20 A"/>
    <property type="chains" value="AN/CN=1-61"/>
</dbReference>
<dbReference type="PDB" id="4V5L">
    <property type="method" value="X-ray"/>
    <property type="resolution" value="3.10 A"/>
    <property type="chains" value="AN=1-61"/>
</dbReference>
<dbReference type="PDB" id="4V5M">
    <property type="method" value="EM"/>
    <property type="resolution" value="7.80 A"/>
    <property type="chains" value="AN=1-61"/>
</dbReference>
<dbReference type="PDB" id="4V5N">
    <property type="method" value="EM"/>
    <property type="resolution" value="7.60 A"/>
    <property type="chains" value="AN=1-61"/>
</dbReference>
<dbReference type="PDB" id="4V5P">
    <property type="method" value="X-ray"/>
    <property type="resolution" value="3.10 A"/>
    <property type="chains" value="AN/CN=1-61"/>
</dbReference>
<dbReference type="PDB" id="4V5Q">
    <property type="method" value="X-ray"/>
    <property type="resolution" value="3.10 A"/>
    <property type="chains" value="AN/CN=1-61"/>
</dbReference>
<dbReference type="PDB" id="4V5R">
    <property type="method" value="X-ray"/>
    <property type="resolution" value="3.10 A"/>
    <property type="chains" value="AN/CN=1-61"/>
</dbReference>
<dbReference type="PDB" id="4V5S">
    <property type="method" value="X-ray"/>
    <property type="resolution" value="3.10 A"/>
    <property type="chains" value="AN/CN=1-61"/>
</dbReference>
<dbReference type="PDB" id="4V68">
    <property type="method" value="EM"/>
    <property type="resolution" value="6.40 A"/>
    <property type="chains" value="AN=2-61"/>
</dbReference>
<dbReference type="PDB" id="4V6A">
    <property type="method" value="X-ray"/>
    <property type="resolution" value="3.10 A"/>
    <property type="chains" value="AN/CN=1-61"/>
</dbReference>
<dbReference type="PDB" id="4V6F">
    <property type="method" value="X-ray"/>
    <property type="resolution" value="3.10 A"/>
    <property type="chains" value="BQ/CQ=1-61"/>
</dbReference>
<dbReference type="PDB" id="4V6G">
    <property type="method" value="X-ray"/>
    <property type="resolution" value="3.50 A"/>
    <property type="chains" value="AQ/CQ=1-61"/>
</dbReference>
<dbReference type="PDB" id="4V7J">
    <property type="method" value="X-ray"/>
    <property type="resolution" value="3.30 A"/>
    <property type="chains" value="An/Bn=1-61"/>
</dbReference>
<dbReference type="PDB" id="4V7K">
    <property type="method" value="X-ray"/>
    <property type="resolution" value="3.60 A"/>
    <property type="chains" value="An/Bn=1-61"/>
</dbReference>
<dbReference type="PDB" id="4V7L">
    <property type="method" value="X-ray"/>
    <property type="resolution" value="3.00 A"/>
    <property type="chains" value="AN/CN=1-61"/>
</dbReference>
<dbReference type="PDB" id="4V7M">
    <property type="method" value="X-ray"/>
    <property type="resolution" value="3.45 A"/>
    <property type="chains" value="AN/CN=1-61"/>
</dbReference>
<dbReference type="PDB" id="4V7W">
    <property type="method" value="X-ray"/>
    <property type="resolution" value="3.00 A"/>
    <property type="chains" value="AN/CN=1-61"/>
</dbReference>
<dbReference type="PDB" id="4V7X">
    <property type="method" value="X-ray"/>
    <property type="resolution" value="3.00 A"/>
    <property type="chains" value="AN/CN=1-61"/>
</dbReference>
<dbReference type="PDB" id="4V7Y">
    <property type="method" value="X-ray"/>
    <property type="resolution" value="3.00 A"/>
    <property type="chains" value="AN/CN=1-61"/>
</dbReference>
<dbReference type="PDB" id="4V7Z">
    <property type="method" value="X-ray"/>
    <property type="resolution" value="3.10 A"/>
    <property type="chains" value="AN/CN=1-61"/>
</dbReference>
<dbReference type="PDB" id="4V87">
    <property type="method" value="X-ray"/>
    <property type="resolution" value="3.10 A"/>
    <property type="chains" value="BQ/CQ=1-61"/>
</dbReference>
<dbReference type="PDB" id="4V8A">
    <property type="method" value="X-ray"/>
    <property type="resolution" value="3.20 A"/>
    <property type="chains" value="CN/DN=1-61"/>
</dbReference>
<dbReference type="PDB" id="4V8B">
    <property type="method" value="X-ray"/>
    <property type="resolution" value="3.00 A"/>
    <property type="chains" value="AQ/CQ=1-61"/>
</dbReference>
<dbReference type="PDB" id="4V8C">
    <property type="method" value="X-ray"/>
    <property type="resolution" value="3.30 A"/>
    <property type="chains" value="CQ/DQ=1-61"/>
</dbReference>
<dbReference type="PDB" id="4V8D">
    <property type="method" value="X-ray"/>
    <property type="resolution" value="3.00 A"/>
    <property type="chains" value="AQ/CQ=1-61"/>
</dbReference>
<dbReference type="PDB" id="4V8E">
    <property type="method" value="X-ray"/>
    <property type="resolution" value="3.30 A"/>
    <property type="chains" value="BQ/DQ=1-61"/>
</dbReference>
<dbReference type="PDB" id="4V8F">
    <property type="method" value="X-ray"/>
    <property type="resolution" value="3.30 A"/>
    <property type="chains" value="BQ/CQ=1-61"/>
</dbReference>
<dbReference type="PDB" id="4V8G">
    <property type="method" value="X-ray"/>
    <property type="resolution" value="3.00 A"/>
    <property type="chains" value="AN/CN=1-61"/>
</dbReference>
<dbReference type="PDB" id="4V8H">
    <property type="method" value="X-ray"/>
    <property type="resolution" value="3.10 A"/>
    <property type="chains" value="AN/CN=1-61"/>
</dbReference>
<dbReference type="PDB" id="4V8I">
    <property type="method" value="X-ray"/>
    <property type="resolution" value="2.70 A"/>
    <property type="chains" value="AN/CN=1-61"/>
</dbReference>
<dbReference type="PDB" id="4V8J">
    <property type="method" value="X-ray"/>
    <property type="resolution" value="3.90 A"/>
    <property type="chains" value="AN/CN=1-61"/>
</dbReference>
<dbReference type="PDB" id="4V8N">
    <property type="method" value="X-ray"/>
    <property type="resolution" value="3.10 A"/>
    <property type="chains" value="AN/CN=1-61"/>
</dbReference>
<dbReference type="PDB" id="4V8O">
    <property type="method" value="X-ray"/>
    <property type="resolution" value="3.80 A"/>
    <property type="chains" value="AN=1-61"/>
</dbReference>
<dbReference type="PDB" id="4V8Q">
    <property type="method" value="X-ray"/>
    <property type="resolution" value="3.10 A"/>
    <property type="chains" value="BN=1-61"/>
</dbReference>
<dbReference type="PDB" id="4V8U">
    <property type="method" value="X-ray"/>
    <property type="resolution" value="3.70 A"/>
    <property type="chains" value="AN/CN=1-61"/>
</dbReference>
<dbReference type="PDB" id="4V8X">
    <property type="method" value="X-ray"/>
    <property type="resolution" value="3.35 A"/>
    <property type="chains" value="AN/CN=1-61"/>
</dbReference>
<dbReference type="PDB" id="4V90">
    <property type="method" value="X-ray"/>
    <property type="resolution" value="2.95 A"/>
    <property type="chains" value="AN=1-61"/>
</dbReference>
<dbReference type="PDB" id="4V95">
    <property type="method" value="X-ray"/>
    <property type="resolution" value="3.20 A"/>
    <property type="chains" value="AN/CN=1-61"/>
</dbReference>
<dbReference type="PDB" id="4V97">
    <property type="method" value="X-ray"/>
    <property type="resolution" value="3.52 A"/>
    <property type="chains" value="AN/CN=1-61"/>
</dbReference>
<dbReference type="PDB" id="4V9A">
    <property type="method" value="X-ray"/>
    <property type="resolution" value="3.30 A"/>
    <property type="chains" value="AQ/CQ=1-61"/>
</dbReference>
<dbReference type="PDB" id="4V9B">
    <property type="method" value="X-ray"/>
    <property type="resolution" value="3.10 A"/>
    <property type="chains" value="AQ/CQ=1-61"/>
</dbReference>
<dbReference type="PDB" id="4V9H">
    <property type="method" value="X-ray"/>
    <property type="resolution" value="2.86 A"/>
    <property type="chains" value="AN=2-61"/>
</dbReference>
<dbReference type="PDB" id="4V9I">
    <property type="method" value="X-ray"/>
    <property type="resolution" value="3.30 A"/>
    <property type="chains" value="AN/CN=2-61"/>
</dbReference>
<dbReference type="PDB" id="4V9R">
    <property type="method" value="X-ray"/>
    <property type="resolution" value="3.00 A"/>
    <property type="chains" value="AN/CN=1-61"/>
</dbReference>
<dbReference type="PDB" id="4V9S">
    <property type="method" value="X-ray"/>
    <property type="resolution" value="3.10 A"/>
    <property type="chains" value="AN/CN=1-61"/>
</dbReference>
<dbReference type="PDB" id="4W2E">
    <property type="method" value="X-ray"/>
    <property type="resolution" value="2.90 A"/>
    <property type="chains" value="n=1-61"/>
</dbReference>
<dbReference type="PDB" id="4W2F">
    <property type="method" value="X-ray"/>
    <property type="resolution" value="2.40 A"/>
    <property type="chains" value="AN/CN=1-61"/>
</dbReference>
<dbReference type="PDB" id="4W2G">
    <property type="method" value="X-ray"/>
    <property type="resolution" value="2.55 A"/>
    <property type="chains" value="AN/CN=1-61"/>
</dbReference>
<dbReference type="PDB" id="4W2H">
    <property type="method" value="X-ray"/>
    <property type="resolution" value="2.70 A"/>
    <property type="chains" value="AN/CN=1-61"/>
</dbReference>
<dbReference type="PDB" id="4W2I">
    <property type="method" value="X-ray"/>
    <property type="resolution" value="2.70 A"/>
    <property type="chains" value="AN/CN=1-61"/>
</dbReference>
<dbReference type="PDB" id="4W4G">
    <property type="method" value="X-ray"/>
    <property type="resolution" value="3.30 A"/>
    <property type="chains" value="QN/XN=1-61"/>
</dbReference>
<dbReference type="PDB" id="4WPO">
    <property type="method" value="X-ray"/>
    <property type="resolution" value="2.80 A"/>
    <property type="chains" value="BN/DN=1-61"/>
</dbReference>
<dbReference type="PDB" id="4WQ1">
    <property type="method" value="X-ray"/>
    <property type="resolution" value="3.10 A"/>
    <property type="chains" value="5A/5I=1-61"/>
</dbReference>
<dbReference type="PDB" id="4WQF">
    <property type="method" value="X-ray"/>
    <property type="resolution" value="2.80 A"/>
    <property type="chains" value="BN/DN=1-61"/>
</dbReference>
<dbReference type="PDB" id="4WQR">
    <property type="method" value="X-ray"/>
    <property type="resolution" value="3.15 A"/>
    <property type="chains" value="5A/5I=1-61"/>
</dbReference>
<dbReference type="PDB" id="4WQU">
    <property type="method" value="X-ray"/>
    <property type="resolution" value="2.80 A"/>
    <property type="chains" value="BN/DN=1-61"/>
</dbReference>
<dbReference type="PDB" id="4WQY">
    <property type="method" value="X-ray"/>
    <property type="resolution" value="2.80 A"/>
    <property type="chains" value="BN/DN=1-61"/>
</dbReference>
<dbReference type="PDB" id="4WR6">
    <property type="method" value="X-ray"/>
    <property type="resolution" value="3.05 A"/>
    <property type="chains" value="5A/5I=1-61"/>
</dbReference>
<dbReference type="PDB" id="4WRA">
    <property type="method" value="X-ray"/>
    <property type="resolution" value="3.05 A"/>
    <property type="chains" value="5A/5I=1-61"/>
</dbReference>
<dbReference type="PDB" id="4WRO">
    <property type="method" value="X-ray"/>
    <property type="resolution" value="3.05 A"/>
    <property type="chains" value="5I=1-61"/>
</dbReference>
<dbReference type="PDB" id="4WSD">
    <property type="method" value="X-ray"/>
    <property type="resolution" value="2.95 A"/>
    <property type="chains" value="5A/5I=1-61"/>
</dbReference>
<dbReference type="PDB" id="4WSM">
    <property type="method" value="X-ray"/>
    <property type="resolution" value="3.30 A"/>
    <property type="chains" value="5A/5I=1-61"/>
</dbReference>
<dbReference type="PDB" id="4WT1">
    <property type="method" value="X-ray"/>
    <property type="resolution" value="3.05 A"/>
    <property type="chains" value="5A/5I=1-61"/>
</dbReference>
<dbReference type="PDB" id="4WT8">
    <property type="method" value="X-ray"/>
    <property type="resolution" value="3.40 A"/>
    <property type="chains" value="AN/BN=2-61"/>
</dbReference>
<dbReference type="PDB" id="4WU1">
    <property type="method" value="X-ray"/>
    <property type="resolution" value="3.20 A"/>
    <property type="chains" value="5A/5I=1-61"/>
</dbReference>
<dbReference type="PDB" id="4WZD">
    <property type="method" value="X-ray"/>
    <property type="resolution" value="3.10 A"/>
    <property type="chains" value="5A/5I=1-61"/>
</dbReference>
<dbReference type="PDB" id="4WZO">
    <property type="method" value="X-ray"/>
    <property type="resolution" value="3.30 A"/>
    <property type="chains" value="5A/5I=1-61"/>
</dbReference>
<dbReference type="PDB" id="4X62">
    <property type="method" value="X-ray"/>
    <property type="resolution" value="3.45 A"/>
    <property type="chains" value="N=2-61"/>
</dbReference>
<dbReference type="PDB" id="4X64">
    <property type="method" value="X-ray"/>
    <property type="resolution" value="3.35 A"/>
    <property type="chains" value="N=2-61"/>
</dbReference>
<dbReference type="PDB" id="4X65">
    <property type="method" value="X-ray"/>
    <property type="resolution" value="3.35 A"/>
    <property type="chains" value="N=2-61"/>
</dbReference>
<dbReference type="PDB" id="4X66">
    <property type="method" value="X-ray"/>
    <property type="resolution" value="3.45 A"/>
    <property type="chains" value="N=2-61"/>
</dbReference>
<dbReference type="PDB" id="4Y4O">
    <property type="method" value="X-ray"/>
    <property type="resolution" value="2.30 A"/>
    <property type="chains" value="1n/2n=1-61"/>
</dbReference>
<dbReference type="PDB" id="4Y4P">
    <property type="method" value="X-ray"/>
    <property type="resolution" value="2.50 A"/>
    <property type="chains" value="1n/2n=1-61"/>
</dbReference>
<dbReference type="PDB" id="4YHH">
    <property type="method" value="X-ray"/>
    <property type="resolution" value="3.42 A"/>
    <property type="chains" value="N=2-61"/>
</dbReference>
<dbReference type="PDB" id="4YPB">
    <property type="method" value="X-ray"/>
    <property type="resolution" value="3.40 A"/>
    <property type="chains" value="QN/XN=1-61"/>
</dbReference>
<dbReference type="PDB" id="4YY3">
    <property type="method" value="X-ray"/>
    <property type="resolution" value="3.60 A"/>
    <property type="chains" value="N=1-61"/>
</dbReference>
<dbReference type="PDB" id="4YZV">
    <property type="method" value="X-ray"/>
    <property type="resolution" value="3.10 A"/>
    <property type="chains" value="QN/XN=1-61"/>
</dbReference>
<dbReference type="PDB" id="4Z3S">
    <property type="method" value="X-ray"/>
    <property type="resolution" value="2.65 A"/>
    <property type="chains" value="1n/2n=1-61"/>
</dbReference>
<dbReference type="PDB" id="4Z8C">
    <property type="method" value="X-ray"/>
    <property type="resolution" value="2.90 A"/>
    <property type="chains" value="1n/2n=1-61"/>
</dbReference>
<dbReference type="PDB" id="4ZER">
    <property type="method" value="X-ray"/>
    <property type="resolution" value="3.10 A"/>
    <property type="chains" value="1n/2n=2-61"/>
</dbReference>
<dbReference type="PDB" id="4ZSN">
    <property type="method" value="X-ray"/>
    <property type="resolution" value="3.60 A"/>
    <property type="chains" value="QN/XN=1-61"/>
</dbReference>
<dbReference type="PDB" id="5A9Z">
    <property type="method" value="EM"/>
    <property type="resolution" value="4.70 A"/>
    <property type="chains" value="BR=2-61"/>
</dbReference>
<dbReference type="PDB" id="5AA0">
    <property type="method" value="EM"/>
    <property type="resolution" value="5.00 A"/>
    <property type="chains" value="BR=2-61"/>
</dbReference>
<dbReference type="PDB" id="5BR8">
    <property type="method" value="X-ray"/>
    <property type="resolution" value="3.40 A"/>
    <property type="chains" value="N=1-61"/>
</dbReference>
<dbReference type="PDB" id="5CZP">
    <property type="method" value="X-ray"/>
    <property type="resolution" value="3.30 A"/>
    <property type="chains" value="QN/XN=1-61"/>
</dbReference>
<dbReference type="PDB" id="5D8B">
    <property type="method" value="X-ray"/>
    <property type="resolution" value="3.63 A"/>
    <property type="chains" value="KC/OA=1-61"/>
</dbReference>
<dbReference type="PDB" id="5DFE">
    <property type="method" value="X-ray"/>
    <property type="resolution" value="3.10 A"/>
    <property type="chains" value="QN/XN=1-61"/>
</dbReference>
<dbReference type="PDB" id="5DOX">
    <property type="method" value="X-ray"/>
    <property type="resolution" value="3.10 A"/>
    <property type="chains" value="1n/2n=1-61"/>
</dbReference>
<dbReference type="PDB" id="5DOY">
    <property type="method" value="X-ray"/>
    <property type="resolution" value="2.60 A"/>
    <property type="chains" value="1n/2n=1-61"/>
</dbReference>
<dbReference type="PDB" id="5E7K">
    <property type="method" value="X-ray"/>
    <property type="resolution" value="3.20 A"/>
    <property type="chains" value="5A/5I=1-61"/>
</dbReference>
<dbReference type="PDB" id="5E81">
    <property type="method" value="X-ray"/>
    <property type="resolution" value="2.95 A"/>
    <property type="chains" value="5A/5I=1-61"/>
</dbReference>
<dbReference type="PDB" id="5EL4">
    <property type="method" value="X-ray"/>
    <property type="resolution" value="3.15 A"/>
    <property type="chains" value="5A/5I=1-61"/>
</dbReference>
<dbReference type="PDB" id="5EL5">
    <property type="method" value="X-ray"/>
    <property type="resolution" value="3.15 A"/>
    <property type="chains" value="5A/5I=1-61"/>
</dbReference>
<dbReference type="PDB" id="5EL6">
    <property type="method" value="X-ray"/>
    <property type="resolution" value="3.10 A"/>
    <property type="chains" value="5A/5I=1-61"/>
</dbReference>
<dbReference type="PDB" id="5EL7">
    <property type="method" value="X-ray"/>
    <property type="resolution" value="3.15 A"/>
    <property type="chains" value="5A/5I=1-61"/>
</dbReference>
<dbReference type="PDB" id="5F8K">
    <property type="method" value="X-ray"/>
    <property type="resolution" value="2.80 A"/>
    <property type="chains" value="1n/2n=2-61"/>
</dbReference>
<dbReference type="PDB" id="5FDU">
    <property type="method" value="X-ray"/>
    <property type="resolution" value="2.90 A"/>
    <property type="chains" value="1n/2n=2-61"/>
</dbReference>
<dbReference type="PDB" id="5FDV">
    <property type="method" value="X-ray"/>
    <property type="resolution" value="2.80 A"/>
    <property type="chains" value="1n/2n=2-61"/>
</dbReference>
<dbReference type="PDB" id="5HAU">
    <property type="method" value="X-ray"/>
    <property type="resolution" value="3.00 A"/>
    <property type="chains" value="1n/2n=1-61"/>
</dbReference>
<dbReference type="PDB" id="5HCP">
    <property type="method" value="X-ray"/>
    <property type="resolution" value="2.89 A"/>
    <property type="chains" value="1n/2n=1-61"/>
</dbReference>
<dbReference type="PDB" id="5HCQ">
    <property type="method" value="X-ray"/>
    <property type="resolution" value="2.80 A"/>
    <property type="chains" value="1n/2n=1-61"/>
</dbReference>
<dbReference type="PDB" id="5HCR">
    <property type="method" value="X-ray"/>
    <property type="resolution" value="2.80 A"/>
    <property type="chains" value="1n/2n=1-61"/>
</dbReference>
<dbReference type="PDB" id="5HD1">
    <property type="method" value="X-ray"/>
    <property type="resolution" value="2.70 A"/>
    <property type="chains" value="1n/2n=1-61"/>
</dbReference>
<dbReference type="PDB" id="5IB7">
    <property type="method" value="X-ray"/>
    <property type="resolution" value="2.99 A"/>
    <property type="chains" value="5A/5I=1-61"/>
</dbReference>
<dbReference type="PDB" id="5IB8">
    <property type="method" value="X-ray"/>
    <property type="resolution" value="3.13 A"/>
    <property type="chains" value="5A/5I=1-61"/>
</dbReference>
<dbReference type="PDB" id="5IBB">
    <property type="method" value="X-ray"/>
    <property type="resolution" value="2.96 A"/>
    <property type="chains" value="5A/5I=1-61"/>
</dbReference>
<dbReference type="PDB" id="5IMQ">
    <property type="method" value="EM"/>
    <property type="resolution" value="3.80 A"/>
    <property type="chains" value="R=1-61"/>
</dbReference>
<dbReference type="PDB" id="5IMR">
    <property type="method" value="EM"/>
    <property type="chains" value="R=1-61"/>
</dbReference>
<dbReference type="PDB" id="5IWA">
    <property type="method" value="X-ray"/>
    <property type="resolution" value="3.50 A"/>
    <property type="chains" value="N=2-61"/>
</dbReference>
<dbReference type="PDB" id="5J30">
    <property type="method" value="X-ray"/>
    <property type="resolution" value="3.20 A"/>
    <property type="chains" value="QN/XN=1-61"/>
</dbReference>
<dbReference type="PDB" id="5J3C">
    <property type="method" value="X-ray"/>
    <property type="resolution" value="3.04 A"/>
    <property type="chains" value="QN/XN=1-61"/>
</dbReference>
<dbReference type="PDB" id="5J4B">
    <property type="method" value="X-ray"/>
    <property type="resolution" value="2.60 A"/>
    <property type="chains" value="1n/2n=1-61"/>
</dbReference>
<dbReference type="PDB" id="5J4C">
    <property type="method" value="X-ray"/>
    <property type="resolution" value="2.80 A"/>
    <property type="chains" value="1n/2n=1-61"/>
</dbReference>
<dbReference type="PDB" id="5J8B">
    <property type="method" value="X-ray"/>
    <property type="resolution" value="2.60 A"/>
    <property type="chains" value="n=1-61"/>
</dbReference>
<dbReference type="PDB" id="5LMN">
    <property type="method" value="EM"/>
    <property type="resolution" value="3.55 A"/>
    <property type="chains" value="N=1-61"/>
</dbReference>
<dbReference type="PDB" id="5LMO">
    <property type="method" value="EM"/>
    <property type="resolution" value="4.30 A"/>
    <property type="chains" value="N=1-61"/>
</dbReference>
<dbReference type="PDB" id="5LMP">
    <property type="method" value="EM"/>
    <property type="resolution" value="5.35 A"/>
    <property type="chains" value="N=1-61"/>
</dbReference>
<dbReference type="PDB" id="5LMQ">
    <property type="method" value="EM"/>
    <property type="resolution" value="4.20 A"/>
    <property type="chains" value="N=1-61"/>
</dbReference>
<dbReference type="PDB" id="5LMR">
    <property type="method" value="EM"/>
    <property type="resolution" value="4.45 A"/>
    <property type="chains" value="N=1-61"/>
</dbReference>
<dbReference type="PDB" id="5LMS">
    <property type="method" value="EM"/>
    <property type="resolution" value="5.10 A"/>
    <property type="chains" value="N=1-61"/>
</dbReference>
<dbReference type="PDB" id="5LMT">
    <property type="method" value="EM"/>
    <property type="resolution" value="4.15 A"/>
    <property type="chains" value="N=1-61"/>
</dbReference>
<dbReference type="PDB" id="5LMU">
    <property type="method" value="EM"/>
    <property type="resolution" value="4.00 A"/>
    <property type="chains" value="N=1-61"/>
</dbReference>
<dbReference type="PDB" id="5LMV">
    <property type="method" value="EM"/>
    <property type="resolution" value="4.90 A"/>
    <property type="chains" value="N=1-61"/>
</dbReference>
<dbReference type="PDB" id="5NDJ">
    <property type="method" value="X-ray"/>
    <property type="resolution" value="3.15 A"/>
    <property type="chains" value="5A/5I=1-61"/>
</dbReference>
<dbReference type="PDB" id="5NDK">
    <property type="method" value="X-ray"/>
    <property type="resolution" value="2.95 A"/>
    <property type="chains" value="5A/5I=1-61"/>
</dbReference>
<dbReference type="PDB" id="5OT7">
    <property type="method" value="EM"/>
    <property type="resolution" value="3.80 A"/>
    <property type="chains" value="M=2-61"/>
</dbReference>
<dbReference type="PDB" id="5UQ7">
    <property type="method" value="EM"/>
    <property type="resolution" value="3.50 A"/>
    <property type="chains" value="n=2-61"/>
</dbReference>
<dbReference type="PDB" id="5UQ8">
    <property type="method" value="EM"/>
    <property type="resolution" value="3.20 A"/>
    <property type="chains" value="n=2-61"/>
</dbReference>
<dbReference type="PDB" id="5VP2">
    <property type="method" value="X-ray"/>
    <property type="resolution" value="2.80 A"/>
    <property type="chains" value="1n/2n=1-61"/>
</dbReference>
<dbReference type="PDB" id="5VPO">
    <property type="method" value="X-ray"/>
    <property type="resolution" value="3.34 A"/>
    <property type="chains" value="QN/XN=1-61"/>
</dbReference>
<dbReference type="PDB" id="5VPP">
    <property type="method" value="X-ray"/>
    <property type="resolution" value="3.90 A"/>
    <property type="chains" value="QN/XN=1-61"/>
</dbReference>
<dbReference type="PDB" id="5W4K">
    <property type="method" value="X-ray"/>
    <property type="resolution" value="2.70 A"/>
    <property type="chains" value="1n/2n=1-61"/>
</dbReference>
<dbReference type="PDB" id="5WIS">
    <property type="method" value="X-ray"/>
    <property type="resolution" value="2.70 A"/>
    <property type="chains" value="1n/2n=1-61"/>
</dbReference>
<dbReference type="PDB" id="5WIT">
    <property type="method" value="X-ray"/>
    <property type="resolution" value="2.60 A"/>
    <property type="chains" value="1n/2n=1-61"/>
</dbReference>
<dbReference type="PDB" id="5WNP">
    <property type="method" value="X-ray"/>
    <property type="resolution" value="3.30 A"/>
    <property type="chains" value="N=2-61"/>
</dbReference>
<dbReference type="PDB" id="5WNQ">
    <property type="method" value="X-ray"/>
    <property type="resolution" value="3.50 A"/>
    <property type="chains" value="N=2-61"/>
</dbReference>
<dbReference type="PDB" id="5WNR">
    <property type="method" value="X-ray"/>
    <property type="resolution" value="3.50 A"/>
    <property type="chains" value="N=2-61"/>
</dbReference>
<dbReference type="PDB" id="5WNS">
    <property type="method" value="X-ray"/>
    <property type="resolution" value="3.50 A"/>
    <property type="chains" value="N=2-61"/>
</dbReference>
<dbReference type="PDB" id="5WNT">
    <property type="method" value="X-ray"/>
    <property type="resolution" value="3.30 A"/>
    <property type="chains" value="N=2-61"/>
</dbReference>
<dbReference type="PDB" id="5WNU">
    <property type="method" value="X-ray"/>
    <property type="resolution" value="3.40 A"/>
    <property type="chains" value="N=2-61"/>
</dbReference>
<dbReference type="PDB" id="5WNV">
    <property type="method" value="X-ray"/>
    <property type="resolution" value="3.30 A"/>
    <property type="chains" value="N=2-61"/>
</dbReference>
<dbReference type="PDB" id="5ZLU">
    <property type="method" value="EM"/>
    <property type="resolution" value="3.60 A"/>
    <property type="chains" value="S=1-61"/>
</dbReference>
<dbReference type="PDB" id="6BUW">
    <property type="method" value="X-ray"/>
    <property type="resolution" value="3.50 A"/>
    <property type="chains" value="QN/XN=1-61"/>
</dbReference>
<dbReference type="PDB" id="6BZ6">
    <property type="method" value="X-ray"/>
    <property type="resolution" value="3.18 A"/>
    <property type="chains" value="QN/XN=1-61"/>
</dbReference>
<dbReference type="PDB" id="6BZ7">
    <property type="method" value="X-ray"/>
    <property type="resolution" value="3.68 A"/>
    <property type="chains" value="QN/XN=1-61"/>
</dbReference>
<dbReference type="PDB" id="6BZ8">
    <property type="method" value="X-ray"/>
    <property type="resolution" value="3.74 A"/>
    <property type="chains" value="QN/XN=1-61"/>
</dbReference>
<dbReference type="PDB" id="6C5L">
    <property type="method" value="X-ray"/>
    <property type="resolution" value="3.20 A"/>
    <property type="chains" value="AN/CN=1-61"/>
</dbReference>
<dbReference type="PDB" id="6CAE">
    <property type="method" value="X-ray"/>
    <property type="resolution" value="2.60 A"/>
    <property type="chains" value="1n/2n=1-61"/>
</dbReference>
<dbReference type="PDB" id="6CAO">
    <property type="method" value="X-ray"/>
    <property type="resolution" value="3.45 A"/>
    <property type="chains" value="N=2-61"/>
</dbReference>
<dbReference type="PDB" id="6CAP">
    <property type="method" value="X-ray"/>
    <property type="resolution" value="3.40 A"/>
    <property type="chains" value="N=2-61"/>
</dbReference>
<dbReference type="PDB" id="6CAQ">
    <property type="method" value="X-ray"/>
    <property type="resolution" value="3.40 A"/>
    <property type="chains" value="N=2-61"/>
</dbReference>
<dbReference type="PDB" id="6CAR">
    <property type="method" value="X-ray"/>
    <property type="resolution" value="3.40 A"/>
    <property type="chains" value="N=2-61"/>
</dbReference>
<dbReference type="PDB" id="6CAS">
    <property type="method" value="X-ray"/>
    <property type="resolution" value="3.50 A"/>
    <property type="chains" value="N=2-61"/>
</dbReference>
<dbReference type="PDB" id="6CFJ">
    <property type="method" value="X-ray"/>
    <property type="resolution" value="2.80 A"/>
    <property type="chains" value="1n/2n=1-61"/>
</dbReference>
<dbReference type="PDB" id="6CFK">
    <property type="method" value="X-ray"/>
    <property type="resolution" value="2.70 A"/>
    <property type="chains" value="1n/2n=1-61"/>
</dbReference>
<dbReference type="PDB" id="6CFL">
    <property type="method" value="X-ray"/>
    <property type="resolution" value="2.60 A"/>
    <property type="chains" value="1n/2n=1-61"/>
</dbReference>
<dbReference type="PDB" id="6CZR">
    <property type="method" value="X-ray"/>
    <property type="resolution" value="3.14 A"/>
    <property type="chains" value="1n/2n=2-61"/>
</dbReference>
<dbReference type="PDB" id="6DTI">
    <property type="method" value="X-ray"/>
    <property type="resolution" value="3.54 A"/>
    <property type="chains" value="N=1-61"/>
</dbReference>
<dbReference type="PDB" id="6FKR">
    <property type="method" value="X-ray"/>
    <property type="resolution" value="3.20 A"/>
    <property type="chains" value="1n/2n=2-61"/>
</dbReference>
<dbReference type="PDB" id="6GSJ">
    <property type="method" value="X-ray"/>
    <property type="resolution" value="2.96 A"/>
    <property type="chains" value="5A/5I=1-61"/>
</dbReference>
<dbReference type="PDB" id="6GSK">
    <property type="method" value="X-ray"/>
    <property type="resolution" value="3.36 A"/>
    <property type="chains" value="5A/5I=1-61"/>
</dbReference>
<dbReference type="PDB" id="6GSL">
    <property type="method" value="X-ray"/>
    <property type="resolution" value="3.16 A"/>
    <property type="chains" value="5A/5I=1-61"/>
</dbReference>
<dbReference type="PDB" id="6GZQ">
    <property type="method" value="EM"/>
    <property type="resolution" value="3.28 A"/>
    <property type="chains" value="N2=2-61"/>
</dbReference>
<dbReference type="PDB" id="6GZX">
    <property type="method" value="EM"/>
    <property type="resolution" value="4.57 A"/>
    <property type="chains" value="N3/N4=2-61"/>
</dbReference>
<dbReference type="PDB" id="6GZZ">
    <property type="method" value="EM"/>
    <property type="resolution" value="4.13 A"/>
    <property type="chains" value="N3/N4=2-61"/>
</dbReference>
<dbReference type="PDB" id="6MKN">
    <property type="method" value="X-ray"/>
    <property type="resolution" value="3.46 A"/>
    <property type="chains" value="N=1-61"/>
</dbReference>
<dbReference type="PDB" id="6MPF">
    <property type="method" value="X-ray"/>
    <property type="resolution" value="3.33 A"/>
    <property type="chains" value="N=2-61"/>
</dbReference>
<dbReference type="PDB" id="6MPI">
    <property type="method" value="X-ray"/>
    <property type="resolution" value="3.33 A"/>
    <property type="chains" value="N=1-61"/>
</dbReference>
<dbReference type="PDB" id="6N9E">
    <property type="method" value="X-ray"/>
    <property type="resolution" value="3.70 A"/>
    <property type="chains" value="1n/2n=1-61"/>
</dbReference>
<dbReference type="PDB" id="6N9F">
    <property type="method" value="X-ray"/>
    <property type="resolution" value="3.70 A"/>
    <property type="chains" value="1n/2n=1-61"/>
</dbReference>
<dbReference type="PDB" id="6ND5">
    <property type="method" value="X-ray"/>
    <property type="resolution" value="2.60 A"/>
    <property type="chains" value="1n/2n=1-61"/>
</dbReference>
<dbReference type="PDB" id="6ND6">
    <property type="method" value="X-ray"/>
    <property type="resolution" value="2.85 A"/>
    <property type="chains" value="1n/2n=1-61"/>
</dbReference>
<dbReference type="PDB" id="6NDK">
    <property type="method" value="X-ray"/>
    <property type="resolution" value="3.64 A"/>
    <property type="chains" value="QN/XN=1-61"/>
</dbReference>
<dbReference type="PDB" id="6NSH">
    <property type="method" value="X-ray"/>
    <property type="resolution" value="3.40 A"/>
    <property type="chains" value="QN/XN=1-61"/>
</dbReference>
<dbReference type="PDB" id="6NTA">
    <property type="method" value="X-ray"/>
    <property type="resolution" value="3.10 A"/>
    <property type="chains" value="QN/XN=1-61"/>
</dbReference>
<dbReference type="PDB" id="6NUO">
    <property type="method" value="X-ray"/>
    <property type="resolution" value="3.20 A"/>
    <property type="chains" value="QN/XN=1-61"/>
</dbReference>
<dbReference type="PDB" id="6NWY">
    <property type="method" value="X-ray"/>
    <property type="resolution" value="3.50 A"/>
    <property type="chains" value="QN/XN=1-61"/>
</dbReference>
<dbReference type="PDB" id="6NY6">
    <property type="method" value="X-ray"/>
    <property type="resolution" value="3.74 A"/>
    <property type="chains" value="N=1-61"/>
</dbReference>
<dbReference type="PDB" id="6O3M">
    <property type="method" value="X-ray"/>
    <property type="resolution" value="3.97 A"/>
    <property type="chains" value="QN/XN=1-61"/>
</dbReference>
<dbReference type="PDB" id="6O97">
    <property type="method" value="X-ray"/>
    <property type="resolution" value="2.75 A"/>
    <property type="chains" value="1n/2n=1-61"/>
</dbReference>
<dbReference type="PDB" id="6OF1">
    <property type="method" value="X-ray"/>
    <property type="resolution" value="2.80 A"/>
    <property type="chains" value="1n/2n=1-61"/>
</dbReference>
<dbReference type="PDB" id="6OF6">
    <property type="method" value="X-ray"/>
    <property type="resolution" value="3.20 A"/>
    <property type="chains" value="QN/XN=1-61"/>
</dbReference>
<dbReference type="PDB" id="6OJ2">
    <property type="method" value="X-ray"/>
    <property type="resolution" value="3.20 A"/>
    <property type="chains" value="QN/XN=1-61"/>
</dbReference>
<dbReference type="PDB" id="6OPE">
    <property type="method" value="X-ray"/>
    <property type="resolution" value="3.10 A"/>
    <property type="chains" value="QN/XN=1-61"/>
</dbReference>
<dbReference type="PDB" id="6ORD">
    <property type="method" value="X-ray"/>
    <property type="resolution" value="3.10 A"/>
    <property type="chains" value="QN/XN=1-61"/>
</dbReference>
<dbReference type="PDB" id="6OSI">
    <property type="method" value="X-ray"/>
    <property type="resolution" value="4.14 A"/>
    <property type="chains" value="QN/XN=1-61"/>
</dbReference>
<dbReference type="PDB" id="6OTR">
    <property type="method" value="X-ray"/>
    <property type="resolution" value="3.12 A"/>
    <property type="chains" value="QN/XN=1-61"/>
</dbReference>
<dbReference type="PDB" id="6OXA">
    <property type="method" value="X-ray"/>
    <property type="resolution" value="3.25 A"/>
    <property type="chains" value="QN/XN=1-61"/>
</dbReference>
<dbReference type="PDB" id="6OXI">
    <property type="method" value="X-ray"/>
    <property type="resolution" value="3.50 A"/>
    <property type="chains" value="QN/XN=1-61"/>
</dbReference>
<dbReference type="PDB" id="6Q95">
    <property type="method" value="EM"/>
    <property type="resolution" value="3.70 A"/>
    <property type="chains" value="s=2-61"/>
</dbReference>
<dbReference type="PDB" id="6QNQ">
    <property type="method" value="X-ray"/>
    <property type="resolution" value="3.50 A"/>
    <property type="chains" value="5A/5I=1-61"/>
</dbReference>
<dbReference type="PDB" id="6QNR">
    <property type="method" value="X-ray"/>
    <property type="resolution" value="3.10 A"/>
    <property type="chains" value="5A/5I=1-61"/>
</dbReference>
<dbReference type="PDB" id="6UCQ">
    <property type="method" value="X-ray"/>
    <property type="resolution" value="3.50 A"/>
    <property type="chains" value="1n/2n=1-61"/>
</dbReference>
<dbReference type="PDB" id="6UO1">
    <property type="method" value="X-ray"/>
    <property type="resolution" value="2.95 A"/>
    <property type="chains" value="1n/2n=1-61"/>
</dbReference>
<dbReference type="PDB" id="6XHV">
    <property type="method" value="X-ray"/>
    <property type="resolution" value="2.40 A"/>
    <property type="chains" value="1n/2n=1-61"/>
</dbReference>
<dbReference type="PDB" id="6XHW">
    <property type="method" value="X-ray"/>
    <property type="resolution" value="2.50 A"/>
    <property type="chains" value="1n/2n=1-61"/>
</dbReference>
<dbReference type="PDB" id="6XHX">
    <property type="method" value="X-ray"/>
    <property type="resolution" value="2.55 A"/>
    <property type="chains" value="1n/2n=1-61"/>
</dbReference>
<dbReference type="PDB" id="6XHY">
    <property type="method" value="X-ray"/>
    <property type="resolution" value="2.60 A"/>
    <property type="chains" value="1n/2n=1-61"/>
</dbReference>
<dbReference type="PDB" id="6XQD">
    <property type="method" value="X-ray"/>
    <property type="resolution" value="2.80 A"/>
    <property type="chains" value="1n/2n=1-61"/>
</dbReference>
<dbReference type="PDB" id="6XQE">
    <property type="method" value="X-ray"/>
    <property type="resolution" value="3.00 A"/>
    <property type="chains" value="1n/2n=1-61"/>
</dbReference>
<dbReference type="PDB" id="7AZO">
    <property type="method" value="X-ray"/>
    <property type="resolution" value="3.30 A"/>
    <property type="chains" value="S14A/S14B=1-61"/>
</dbReference>
<dbReference type="PDB" id="7AZS">
    <property type="method" value="X-ray"/>
    <property type="resolution" value="3.10 A"/>
    <property type="chains" value="S14A/S14B=1-61"/>
</dbReference>
<dbReference type="PDB" id="7DUG">
    <property type="method" value="X-ray"/>
    <property type="resolution" value="3.75 A"/>
    <property type="chains" value="N=1-61"/>
</dbReference>
<dbReference type="PDB" id="7DUH">
    <property type="method" value="X-ray"/>
    <property type="resolution" value="3.75 A"/>
    <property type="chains" value="N=1-61"/>
</dbReference>
<dbReference type="PDB" id="7DUI">
    <property type="method" value="X-ray"/>
    <property type="resolution" value="3.62 A"/>
    <property type="chains" value="N=1-61"/>
</dbReference>
<dbReference type="PDB" id="7DUJ">
    <property type="method" value="X-ray"/>
    <property type="resolution" value="3.75 A"/>
    <property type="chains" value="N=1-61"/>
</dbReference>
<dbReference type="PDB" id="7DUK">
    <property type="method" value="X-ray"/>
    <property type="resolution" value="3.60 A"/>
    <property type="chains" value="N=1-61"/>
</dbReference>
<dbReference type="PDB" id="7DUL">
    <property type="method" value="X-ray"/>
    <property type="resolution" value="3.62 A"/>
    <property type="chains" value="N=1-61"/>
</dbReference>
<dbReference type="PDB" id="7JQL">
    <property type="method" value="X-ray"/>
    <property type="resolution" value="3.00 A"/>
    <property type="chains" value="1n/2n=1-61"/>
</dbReference>
<dbReference type="PDB" id="7JQM">
    <property type="method" value="X-ray"/>
    <property type="resolution" value="3.05 A"/>
    <property type="chains" value="1n/2n=1-61"/>
</dbReference>
<dbReference type="PDB" id="7LH5">
    <property type="method" value="X-ray"/>
    <property type="resolution" value="3.27 A"/>
    <property type="chains" value="AN/CN=1-61"/>
</dbReference>
<dbReference type="PDB" id="7MD7">
    <property type="method" value="X-ray"/>
    <property type="resolution" value="2.80 A"/>
    <property type="chains" value="1n/2n=1-61"/>
</dbReference>
<dbReference type="PDB" id="7RQ8">
    <property type="method" value="X-ray"/>
    <property type="resolution" value="2.50 A"/>
    <property type="chains" value="1n/2n=1-61"/>
</dbReference>
<dbReference type="PDB" id="7RQ9">
    <property type="method" value="X-ray"/>
    <property type="resolution" value="2.60 A"/>
    <property type="chains" value="1n/2n=1-61"/>
</dbReference>
<dbReference type="PDB" id="7RQA">
    <property type="method" value="X-ray"/>
    <property type="resolution" value="2.40 A"/>
    <property type="chains" value="1n/2n=1-61"/>
</dbReference>
<dbReference type="PDB" id="7RQB">
    <property type="method" value="X-ray"/>
    <property type="resolution" value="2.45 A"/>
    <property type="chains" value="1n/2n=1-61"/>
</dbReference>
<dbReference type="PDB" id="7RQC">
    <property type="method" value="X-ray"/>
    <property type="resolution" value="2.50 A"/>
    <property type="chains" value="1n/2n=1-61"/>
</dbReference>
<dbReference type="PDB" id="7RQD">
    <property type="method" value="X-ray"/>
    <property type="resolution" value="2.50 A"/>
    <property type="chains" value="1n/2n=1-61"/>
</dbReference>
<dbReference type="PDB" id="7RQE">
    <property type="method" value="X-ray"/>
    <property type="resolution" value="2.40 A"/>
    <property type="chains" value="1n/2n=1-61"/>
</dbReference>
<dbReference type="PDB" id="7U2H">
    <property type="method" value="X-ray"/>
    <property type="resolution" value="2.55 A"/>
    <property type="chains" value="1n/2n=1-61"/>
</dbReference>
<dbReference type="PDB" id="7U2I">
    <property type="method" value="X-ray"/>
    <property type="resolution" value="2.55 A"/>
    <property type="chains" value="1n/2n=1-61"/>
</dbReference>
<dbReference type="PDB" id="7U2J">
    <property type="method" value="X-ray"/>
    <property type="resolution" value="2.55 A"/>
    <property type="chains" value="1n/2n=1-61"/>
</dbReference>
<dbReference type="PDB" id="7V2L">
    <property type="method" value="EM"/>
    <property type="resolution" value="3.30 A"/>
    <property type="chains" value="N=1-61"/>
</dbReference>
<dbReference type="PDB" id="7V2M">
    <property type="method" value="EM"/>
    <property type="resolution" value="3.40 A"/>
    <property type="chains" value="N=1-61"/>
</dbReference>
<dbReference type="PDB" id="7V2N">
    <property type="method" value="EM"/>
    <property type="resolution" value="3.60 A"/>
    <property type="chains" value="N=1-61"/>
</dbReference>
<dbReference type="PDB" id="7V2O">
    <property type="method" value="EM"/>
    <property type="resolution" value="3.50 A"/>
    <property type="chains" value="N=1-61"/>
</dbReference>
<dbReference type="PDB" id="7V2P">
    <property type="method" value="EM"/>
    <property type="resolution" value="3.30 A"/>
    <property type="chains" value="N=1-61"/>
</dbReference>
<dbReference type="PDB" id="7V2Q">
    <property type="method" value="EM"/>
    <property type="resolution" value="3.24 A"/>
    <property type="chains" value="N=1-61"/>
</dbReference>
<dbReference type="PDB" id="8CVJ">
    <property type="method" value="X-ray"/>
    <property type="resolution" value="2.40 A"/>
    <property type="chains" value="1n/2n=1-61"/>
</dbReference>
<dbReference type="PDB" id="8CVK">
    <property type="method" value="X-ray"/>
    <property type="resolution" value="2.50 A"/>
    <property type="chains" value="1n/2n=1-61"/>
</dbReference>
<dbReference type="PDB" id="8CVL">
    <property type="method" value="X-ray"/>
    <property type="resolution" value="2.30 A"/>
    <property type="chains" value="1n/2n=1-61"/>
</dbReference>
<dbReference type="PDB" id="8EKB">
    <property type="method" value="X-ray"/>
    <property type="resolution" value="2.70 A"/>
    <property type="chains" value="1n/2n=1-61"/>
</dbReference>
<dbReference type="PDB" id="8EV6">
    <property type="method" value="X-ray"/>
    <property type="resolution" value="2.95 A"/>
    <property type="chains" value="1n/2n=1-61"/>
</dbReference>
<dbReference type="PDB" id="8EV7">
    <property type="method" value="X-ray"/>
    <property type="resolution" value="2.89 A"/>
    <property type="chains" value="1n/2n=1-61"/>
</dbReference>
<dbReference type="PDB" id="8FC1">
    <property type="method" value="X-ray"/>
    <property type="resolution" value="2.50 A"/>
    <property type="chains" value="1n/2n=1-61"/>
</dbReference>
<dbReference type="PDB" id="8FC2">
    <property type="method" value="X-ray"/>
    <property type="resolution" value="2.50 A"/>
    <property type="chains" value="1n/2n=1-61"/>
</dbReference>
<dbReference type="PDB" id="8FC3">
    <property type="method" value="X-ray"/>
    <property type="resolution" value="2.60 A"/>
    <property type="chains" value="1n/2n=1-61"/>
</dbReference>
<dbReference type="PDB" id="8FC4">
    <property type="method" value="X-ray"/>
    <property type="resolution" value="2.45 A"/>
    <property type="chains" value="1n/2n=1-61"/>
</dbReference>
<dbReference type="PDB" id="8FC5">
    <property type="method" value="X-ray"/>
    <property type="resolution" value="2.65 A"/>
    <property type="chains" value="1n/2n=1-61"/>
</dbReference>
<dbReference type="PDB" id="8FC6">
    <property type="method" value="X-ray"/>
    <property type="resolution" value="2.35 A"/>
    <property type="chains" value="1n/2n=1-61"/>
</dbReference>
<dbReference type="PDB" id="8FOM">
    <property type="method" value="X-ray"/>
    <property type="resolution" value="3.58 A"/>
    <property type="chains" value="QN/XN=1-61"/>
</dbReference>
<dbReference type="PDB" id="8FON">
    <property type="method" value="X-ray"/>
    <property type="resolution" value="3.64 A"/>
    <property type="chains" value="QN/XN=1-61"/>
</dbReference>
<dbReference type="PDB" id="8G29">
    <property type="method" value="X-ray"/>
    <property type="resolution" value="2.55 A"/>
    <property type="chains" value="1n/2n=1-61"/>
</dbReference>
<dbReference type="PDB" id="8G2A">
    <property type="method" value="X-ray"/>
    <property type="resolution" value="2.45 A"/>
    <property type="chains" value="1n/2n=1-61"/>
</dbReference>
<dbReference type="PDB" id="8G2B">
    <property type="method" value="X-ray"/>
    <property type="resolution" value="2.55 A"/>
    <property type="chains" value="1n/2n=1-61"/>
</dbReference>
<dbReference type="PDB" id="8G2C">
    <property type="method" value="X-ray"/>
    <property type="resolution" value="2.65 A"/>
    <property type="chains" value="1n/2n=1-61"/>
</dbReference>
<dbReference type="PDB" id="8G2D">
    <property type="method" value="X-ray"/>
    <property type="resolution" value="2.70 A"/>
    <property type="chains" value="1n/2n=1-61"/>
</dbReference>
<dbReference type="PDB" id="8T8B">
    <property type="method" value="X-ray"/>
    <property type="resolution" value="2.65 A"/>
    <property type="chains" value="1n/2n=1-61"/>
</dbReference>
<dbReference type="PDB" id="8T8C">
    <property type="method" value="X-ray"/>
    <property type="resolution" value="2.60 A"/>
    <property type="chains" value="1n/2n=1-61"/>
</dbReference>
<dbReference type="PDB" id="8UD6">
    <property type="method" value="X-ray"/>
    <property type="resolution" value="2.70 A"/>
    <property type="chains" value="1n/2n=1-61"/>
</dbReference>
<dbReference type="PDB" id="8UD7">
    <property type="method" value="X-ray"/>
    <property type="resolution" value="2.55 A"/>
    <property type="chains" value="1n/2n=1-61"/>
</dbReference>
<dbReference type="PDB" id="8UD8">
    <property type="method" value="X-ray"/>
    <property type="resolution" value="2.60 A"/>
    <property type="chains" value="1n/2n=1-61"/>
</dbReference>
<dbReference type="PDB" id="8UVR">
    <property type="method" value="X-ray"/>
    <property type="resolution" value="2.60 A"/>
    <property type="chains" value="1n/2n=1-61"/>
</dbReference>
<dbReference type="PDB" id="8UVS">
    <property type="method" value="X-ray"/>
    <property type="resolution" value="2.75 A"/>
    <property type="chains" value="1n/2n=1-61"/>
</dbReference>
<dbReference type="PDB" id="8VTU">
    <property type="method" value="X-ray"/>
    <property type="resolution" value="2.40 A"/>
    <property type="chains" value="1n/2n=1-61"/>
</dbReference>
<dbReference type="PDB" id="8VTV">
    <property type="method" value="X-ray"/>
    <property type="resolution" value="2.55 A"/>
    <property type="chains" value="1n/2n=1-61"/>
</dbReference>
<dbReference type="PDB" id="8VTW">
    <property type="method" value="X-ray"/>
    <property type="resolution" value="2.35 A"/>
    <property type="chains" value="1n/2n=1-61"/>
</dbReference>
<dbReference type="PDB" id="8VTX">
    <property type="method" value="X-ray"/>
    <property type="resolution" value="2.40 A"/>
    <property type="chains" value="1n/2n=1-61"/>
</dbReference>
<dbReference type="PDB" id="8VTY">
    <property type="method" value="X-ray"/>
    <property type="resolution" value="2.60 A"/>
    <property type="chains" value="1n/2n=1-61"/>
</dbReference>
<dbReference type="PDB" id="9B00">
    <property type="method" value="X-ray"/>
    <property type="resolution" value="2.80 A"/>
    <property type="chains" value="1n/2n=1-61"/>
</dbReference>
<dbReference type="PDB" id="9D0J">
    <property type="method" value="X-ray"/>
    <property type="resolution" value="2.50 A"/>
    <property type="chains" value="1n/2n=1-61"/>
</dbReference>
<dbReference type="PDB" id="9D7R">
    <property type="method" value="X-ray"/>
    <property type="resolution" value="2.70 A"/>
    <property type="chains" value="1n/2n=1-61"/>
</dbReference>
<dbReference type="PDB" id="9D7S">
    <property type="method" value="X-ray"/>
    <property type="resolution" value="2.85 A"/>
    <property type="chains" value="1n/2n=1-61"/>
</dbReference>
<dbReference type="PDB" id="9D7T">
    <property type="method" value="X-ray"/>
    <property type="resolution" value="2.70 A"/>
    <property type="chains" value="1n/2n=1-61"/>
</dbReference>
<dbReference type="PDB" id="9DFC">
    <property type="method" value="X-ray"/>
    <property type="resolution" value="2.50 A"/>
    <property type="chains" value="1n/2n=1-61"/>
</dbReference>
<dbReference type="PDB" id="9DFD">
    <property type="method" value="X-ray"/>
    <property type="resolution" value="2.60 A"/>
    <property type="chains" value="1n/2n=1-61"/>
</dbReference>
<dbReference type="PDB" id="9DFE">
    <property type="method" value="X-ray"/>
    <property type="resolution" value="2.60 A"/>
    <property type="chains" value="1n/2n=1-61"/>
</dbReference>
<dbReference type="PDBsum" id="1FJG"/>
<dbReference type="PDBsum" id="1HNW"/>
<dbReference type="PDBsum" id="1HNX"/>
<dbReference type="PDBsum" id="1HNZ"/>
<dbReference type="PDBsum" id="1HR0"/>
<dbReference type="PDBsum" id="1I94"/>
<dbReference type="PDBsum" id="1I95"/>
<dbReference type="PDBsum" id="1I96"/>
<dbReference type="PDBsum" id="1I97"/>
<dbReference type="PDBsum" id="1IBK"/>
<dbReference type="PDBsum" id="1IBL"/>
<dbReference type="PDBsum" id="1IBM"/>
<dbReference type="PDBsum" id="1J5E"/>
<dbReference type="PDBsum" id="1JGO"/>
<dbReference type="PDBsum" id="1JGP"/>
<dbReference type="PDBsum" id="1JGQ"/>
<dbReference type="PDBsum" id="1ML5"/>
<dbReference type="PDBsum" id="1N32"/>
<dbReference type="PDBsum" id="1N33"/>
<dbReference type="PDBsum" id="1N34"/>
<dbReference type="PDBsum" id="1N36"/>
<dbReference type="PDBsum" id="1VVJ"/>
<dbReference type="PDBsum" id="1VY4"/>
<dbReference type="PDBsum" id="1VY5"/>
<dbReference type="PDBsum" id="1VY6"/>
<dbReference type="PDBsum" id="1VY7"/>
<dbReference type="PDBsum" id="1XMO"/>
<dbReference type="PDBsum" id="1XMQ"/>
<dbReference type="PDBsum" id="1XNQ"/>
<dbReference type="PDBsum" id="1XNR"/>
<dbReference type="PDBsum" id="2E5L"/>
<dbReference type="PDBsum" id="2F4V"/>
<dbReference type="PDBsum" id="2HHH"/>
<dbReference type="PDBsum" id="2UU9"/>
<dbReference type="PDBsum" id="2UUA"/>
<dbReference type="PDBsum" id="2UUB"/>
<dbReference type="PDBsum" id="2UUC"/>
<dbReference type="PDBsum" id="2UXB"/>
<dbReference type="PDBsum" id="2UXC"/>
<dbReference type="PDBsum" id="2UXD"/>
<dbReference type="PDBsum" id="2VQE"/>
<dbReference type="PDBsum" id="2VQF"/>
<dbReference type="PDBsum" id="2ZM6"/>
<dbReference type="PDBsum" id="3OTO"/>
<dbReference type="PDBsum" id="3T1H"/>
<dbReference type="PDBsum" id="3T1Y"/>
<dbReference type="PDBsum" id="4AQY"/>
<dbReference type="PDBsum" id="4B3M"/>
<dbReference type="PDBsum" id="4B3R"/>
<dbReference type="PDBsum" id="4B3S"/>
<dbReference type="PDBsum" id="4B3T"/>
<dbReference type="PDBsum" id="4DR1"/>
<dbReference type="PDBsum" id="4DR2"/>
<dbReference type="PDBsum" id="4DR3"/>
<dbReference type="PDBsum" id="4DR4"/>
<dbReference type="PDBsum" id="4DR5"/>
<dbReference type="PDBsum" id="4DR6"/>
<dbReference type="PDBsum" id="4DR7"/>
<dbReference type="PDBsum" id="4DUY"/>
<dbReference type="PDBsum" id="4DUZ"/>
<dbReference type="PDBsum" id="4DV0"/>
<dbReference type="PDBsum" id="4DV1"/>
<dbReference type="PDBsum" id="4DV2"/>
<dbReference type="PDBsum" id="4DV3"/>
<dbReference type="PDBsum" id="4DV4"/>
<dbReference type="PDBsum" id="4DV5"/>
<dbReference type="PDBsum" id="4DV6"/>
<dbReference type="PDBsum" id="4DV7"/>
<dbReference type="PDBsum" id="4GKJ"/>
<dbReference type="PDBsum" id="4GKK"/>
<dbReference type="PDBsum" id="4JI0"/>
<dbReference type="PDBsum" id="4JI1"/>
<dbReference type="PDBsum" id="4JI2"/>
<dbReference type="PDBsum" id="4JI3"/>
<dbReference type="PDBsum" id="4JI4"/>
<dbReference type="PDBsum" id="4JI5"/>
<dbReference type="PDBsum" id="4JI6"/>
<dbReference type="PDBsum" id="4JI7"/>
<dbReference type="PDBsum" id="4JI8"/>
<dbReference type="PDBsum" id="4JV5"/>
<dbReference type="PDBsum" id="4JYA"/>
<dbReference type="PDBsum" id="4K0K"/>
<dbReference type="PDBsum" id="4KHP"/>
<dbReference type="PDBsum" id="4L47"/>
<dbReference type="PDBsum" id="4L71"/>
<dbReference type="PDBsum" id="4LEL"/>
<dbReference type="PDBsum" id="4LF4"/>
<dbReference type="PDBsum" id="4LF5"/>
<dbReference type="PDBsum" id="4LF6"/>
<dbReference type="PDBsum" id="4LF7"/>
<dbReference type="PDBsum" id="4LF8"/>
<dbReference type="PDBsum" id="4LF9"/>
<dbReference type="PDBsum" id="4LFA"/>
<dbReference type="PDBsum" id="4LFB"/>
<dbReference type="PDBsum" id="4LFC"/>
<dbReference type="PDBsum" id="4LFZ"/>
<dbReference type="PDBsum" id="4LNT"/>
<dbReference type="PDBsum" id="4LSK"/>
<dbReference type="PDBsum" id="4LT8"/>
<dbReference type="PDBsum" id="4NXM"/>
<dbReference type="PDBsum" id="4NXN"/>
<dbReference type="PDBsum" id="4OX9"/>
<dbReference type="PDBsum" id="4P6F"/>
<dbReference type="PDBsum" id="4P70"/>
<dbReference type="PDBsum" id="4TUA"/>
<dbReference type="PDBsum" id="4TUB"/>
<dbReference type="PDBsum" id="4TUC"/>
<dbReference type="PDBsum" id="4TUD"/>
<dbReference type="PDBsum" id="4TUE"/>
<dbReference type="PDBsum" id="4V42"/>
<dbReference type="PDBsum" id="4V49"/>
<dbReference type="PDBsum" id="4V4A"/>
<dbReference type="PDBsum" id="4V4I"/>
<dbReference type="PDBsum" id="4V4P"/>
<dbReference type="PDBsum" id="4V4R"/>
<dbReference type="PDBsum" id="4V4S"/>
<dbReference type="PDBsum" id="4V4T"/>
<dbReference type="PDBsum" id="4V4X"/>
<dbReference type="PDBsum" id="4V4Y"/>
<dbReference type="PDBsum" id="4V4Z"/>
<dbReference type="PDBsum" id="4V51"/>
<dbReference type="PDBsum" id="4V5A"/>
<dbReference type="PDBsum" id="4V5C"/>
<dbReference type="PDBsum" id="4V5D"/>
<dbReference type="PDBsum" id="4V5E"/>
<dbReference type="PDBsum" id="4V5F"/>
<dbReference type="PDBsum" id="4V5G"/>
<dbReference type="PDBsum" id="4V5J"/>
<dbReference type="PDBsum" id="4V5K"/>
<dbReference type="PDBsum" id="4V5L"/>
<dbReference type="PDBsum" id="4V5M"/>
<dbReference type="PDBsum" id="4V5N"/>
<dbReference type="PDBsum" id="4V5P"/>
<dbReference type="PDBsum" id="4V5Q"/>
<dbReference type="PDBsum" id="4V5R"/>
<dbReference type="PDBsum" id="4V5S"/>
<dbReference type="PDBsum" id="4V68"/>
<dbReference type="PDBsum" id="4V6A"/>
<dbReference type="PDBsum" id="4V6F"/>
<dbReference type="PDBsum" id="4V6G"/>
<dbReference type="PDBsum" id="4V7J"/>
<dbReference type="PDBsum" id="4V7K"/>
<dbReference type="PDBsum" id="4V7L"/>
<dbReference type="PDBsum" id="4V7M"/>
<dbReference type="PDBsum" id="4V7W"/>
<dbReference type="PDBsum" id="4V7X"/>
<dbReference type="PDBsum" id="4V7Y"/>
<dbReference type="PDBsum" id="4V7Z"/>
<dbReference type="PDBsum" id="4V87"/>
<dbReference type="PDBsum" id="4V8A"/>
<dbReference type="PDBsum" id="4V8B"/>
<dbReference type="PDBsum" id="4V8C"/>
<dbReference type="PDBsum" id="4V8D"/>
<dbReference type="PDBsum" id="4V8E"/>
<dbReference type="PDBsum" id="4V8F"/>
<dbReference type="PDBsum" id="4V8G"/>
<dbReference type="PDBsum" id="4V8H"/>
<dbReference type="PDBsum" id="4V8I"/>
<dbReference type="PDBsum" id="4V8J"/>
<dbReference type="PDBsum" id="4V8N"/>
<dbReference type="PDBsum" id="4V8O"/>
<dbReference type="PDBsum" id="4V8Q"/>
<dbReference type="PDBsum" id="4V8U"/>
<dbReference type="PDBsum" id="4V8X"/>
<dbReference type="PDBsum" id="4V90"/>
<dbReference type="PDBsum" id="4V95"/>
<dbReference type="PDBsum" id="4V97"/>
<dbReference type="PDBsum" id="4V9A"/>
<dbReference type="PDBsum" id="4V9B"/>
<dbReference type="PDBsum" id="4V9H"/>
<dbReference type="PDBsum" id="4V9I"/>
<dbReference type="PDBsum" id="4V9R"/>
<dbReference type="PDBsum" id="4V9S"/>
<dbReference type="PDBsum" id="4W2E"/>
<dbReference type="PDBsum" id="4W2F"/>
<dbReference type="PDBsum" id="4W2G"/>
<dbReference type="PDBsum" id="4W2H"/>
<dbReference type="PDBsum" id="4W2I"/>
<dbReference type="PDBsum" id="4W4G"/>
<dbReference type="PDBsum" id="4WPO"/>
<dbReference type="PDBsum" id="4WQ1"/>
<dbReference type="PDBsum" id="4WQF"/>
<dbReference type="PDBsum" id="4WQR"/>
<dbReference type="PDBsum" id="4WQU"/>
<dbReference type="PDBsum" id="4WQY"/>
<dbReference type="PDBsum" id="4WR6"/>
<dbReference type="PDBsum" id="4WRA"/>
<dbReference type="PDBsum" id="4WRO"/>
<dbReference type="PDBsum" id="4WSD"/>
<dbReference type="PDBsum" id="4WSM"/>
<dbReference type="PDBsum" id="4WT1"/>
<dbReference type="PDBsum" id="4WT8"/>
<dbReference type="PDBsum" id="4WU1"/>
<dbReference type="PDBsum" id="4WZD"/>
<dbReference type="PDBsum" id="4WZO"/>
<dbReference type="PDBsum" id="4X62"/>
<dbReference type="PDBsum" id="4X64"/>
<dbReference type="PDBsum" id="4X65"/>
<dbReference type="PDBsum" id="4X66"/>
<dbReference type="PDBsum" id="4Y4O"/>
<dbReference type="PDBsum" id="4Y4P"/>
<dbReference type="PDBsum" id="4YHH"/>
<dbReference type="PDBsum" id="4YPB"/>
<dbReference type="PDBsum" id="4YY3"/>
<dbReference type="PDBsum" id="4YZV"/>
<dbReference type="PDBsum" id="4Z3S"/>
<dbReference type="PDBsum" id="4Z8C"/>
<dbReference type="PDBsum" id="4ZER"/>
<dbReference type="PDBsum" id="4ZSN"/>
<dbReference type="PDBsum" id="5A9Z"/>
<dbReference type="PDBsum" id="5AA0"/>
<dbReference type="PDBsum" id="5BR8"/>
<dbReference type="PDBsum" id="5CZP"/>
<dbReference type="PDBsum" id="5D8B"/>
<dbReference type="PDBsum" id="5DFE"/>
<dbReference type="PDBsum" id="5DOX"/>
<dbReference type="PDBsum" id="5DOY"/>
<dbReference type="PDBsum" id="5E7K"/>
<dbReference type="PDBsum" id="5E81"/>
<dbReference type="PDBsum" id="5EL4"/>
<dbReference type="PDBsum" id="5EL5"/>
<dbReference type="PDBsum" id="5EL6"/>
<dbReference type="PDBsum" id="5EL7"/>
<dbReference type="PDBsum" id="5F8K"/>
<dbReference type="PDBsum" id="5FDU"/>
<dbReference type="PDBsum" id="5FDV"/>
<dbReference type="PDBsum" id="5HAU"/>
<dbReference type="PDBsum" id="5HCP"/>
<dbReference type="PDBsum" id="5HCQ"/>
<dbReference type="PDBsum" id="5HCR"/>
<dbReference type="PDBsum" id="5HD1"/>
<dbReference type="PDBsum" id="5IB7"/>
<dbReference type="PDBsum" id="5IB8"/>
<dbReference type="PDBsum" id="5IBB"/>
<dbReference type="PDBsum" id="5IMQ"/>
<dbReference type="PDBsum" id="5IMR"/>
<dbReference type="PDBsum" id="5IWA"/>
<dbReference type="PDBsum" id="5J30"/>
<dbReference type="PDBsum" id="5J3C"/>
<dbReference type="PDBsum" id="5J4B"/>
<dbReference type="PDBsum" id="5J4C"/>
<dbReference type="PDBsum" id="5J8B"/>
<dbReference type="PDBsum" id="5LMN"/>
<dbReference type="PDBsum" id="5LMO"/>
<dbReference type="PDBsum" id="5LMP"/>
<dbReference type="PDBsum" id="5LMQ"/>
<dbReference type="PDBsum" id="5LMR"/>
<dbReference type="PDBsum" id="5LMS"/>
<dbReference type="PDBsum" id="5LMT"/>
<dbReference type="PDBsum" id="5LMU"/>
<dbReference type="PDBsum" id="5LMV"/>
<dbReference type="PDBsum" id="5NDJ"/>
<dbReference type="PDBsum" id="5NDK"/>
<dbReference type="PDBsum" id="5OT7"/>
<dbReference type="PDBsum" id="5UQ7"/>
<dbReference type="PDBsum" id="5UQ8"/>
<dbReference type="PDBsum" id="5VP2"/>
<dbReference type="PDBsum" id="5VPO"/>
<dbReference type="PDBsum" id="5VPP"/>
<dbReference type="PDBsum" id="5W4K"/>
<dbReference type="PDBsum" id="5WIS"/>
<dbReference type="PDBsum" id="5WIT"/>
<dbReference type="PDBsum" id="5WNP"/>
<dbReference type="PDBsum" id="5WNQ"/>
<dbReference type="PDBsum" id="5WNR"/>
<dbReference type="PDBsum" id="5WNS"/>
<dbReference type="PDBsum" id="5WNT"/>
<dbReference type="PDBsum" id="5WNU"/>
<dbReference type="PDBsum" id="5WNV"/>
<dbReference type="PDBsum" id="5ZLU"/>
<dbReference type="PDBsum" id="6BUW"/>
<dbReference type="PDBsum" id="6BZ6"/>
<dbReference type="PDBsum" id="6BZ7"/>
<dbReference type="PDBsum" id="6BZ8"/>
<dbReference type="PDBsum" id="6C5L"/>
<dbReference type="PDBsum" id="6CAE"/>
<dbReference type="PDBsum" id="6CAO"/>
<dbReference type="PDBsum" id="6CAP"/>
<dbReference type="PDBsum" id="6CAQ"/>
<dbReference type="PDBsum" id="6CAR"/>
<dbReference type="PDBsum" id="6CAS"/>
<dbReference type="PDBsum" id="6CFJ"/>
<dbReference type="PDBsum" id="6CFK"/>
<dbReference type="PDBsum" id="6CFL"/>
<dbReference type="PDBsum" id="6CZR"/>
<dbReference type="PDBsum" id="6DTI"/>
<dbReference type="PDBsum" id="6FKR"/>
<dbReference type="PDBsum" id="6GSJ"/>
<dbReference type="PDBsum" id="6GSK"/>
<dbReference type="PDBsum" id="6GSL"/>
<dbReference type="PDBsum" id="6GZQ"/>
<dbReference type="PDBsum" id="6GZX"/>
<dbReference type="PDBsum" id="6GZZ"/>
<dbReference type="PDBsum" id="6MKN"/>
<dbReference type="PDBsum" id="6MPF"/>
<dbReference type="PDBsum" id="6MPI"/>
<dbReference type="PDBsum" id="6N9E"/>
<dbReference type="PDBsum" id="6N9F"/>
<dbReference type="PDBsum" id="6ND5"/>
<dbReference type="PDBsum" id="6ND6"/>
<dbReference type="PDBsum" id="6NDK"/>
<dbReference type="PDBsum" id="6NSH"/>
<dbReference type="PDBsum" id="6NTA"/>
<dbReference type="PDBsum" id="6NUO"/>
<dbReference type="PDBsum" id="6NWY"/>
<dbReference type="PDBsum" id="6NY6"/>
<dbReference type="PDBsum" id="6O3M"/>
<dbReference type="PDBsum" id="6O97"/>
<dbReference type="PDBsum" id="6OF1"/>
<dbReference type="PDBsum" id="6OF6"/>
<dbReference type="PDBsum" id="6OJ2"/>
<dbReference type="PDBsum" id="6OPE"/>
<dbReference type="PDBsum" id="6ORD"/>
<dbReference type="PDBsum" id="6OSI"/>
<dbReference type="PDBsum" id="6OTR"/>
<dbReference type="PDBsum" id="6OXA"/>
<dbReference type="PDBsum" id="6OXI"/>
<dbReference type="PDBsum" id="6Q95"/>
<dbReference type="PDBsum" id="6QNQ"/>
<dbReference type="PDBsum" id="6QNR"/>
<dbReference type="PDBsum" id="6UCQ"/>
<dbReference type="PDBsum" id="6UO1"/>
<dbReference type="PDBsum" id="6XHV"/>
<dbReference type="PDBsum" id="6XHW"/>
<dbReference type="PDBsum" id="6XHX"/>
<dbReference type="PDBsum" id="6XHY"/>
<dbReference type="PDBsum" id="6XQD"/>
<dbReference type="PDBsum" id="6XQE"/>
<dbReference type="PDBsum" id="7AZO"/>
<dbReference type="PDBsum" id="7AZS"/>
<dbReference type="PDBsum" id="7DUG"/>
<dbReference type="PDBsum" id="7DUH"/>
<dbReference type="PDBsum" id="7DUI"/>
<dbReference type="PDBsum" id="7DUJ"/>
<dbReference type="PDBsum" id="7DUK"/>
<dbReference type="PDBsum" id="7DUL"/>
<dbReference type="PDBsum" id="7JQL"/>
<dbReference type="PDBsum" id="7JQM"/>
<dbReference type="PDBsum" id="7LH5"/>
<dbReference type="PDBsum" id="7MD7"/>
<dbReference type="PDBsum" id="7RQ8"/>
<dbReference type="PDBsum" id="7RQ9"/>
<dbReference type="PDBsum" id="7RQA"/>
<dbReference type="PDBsum" id="7RQB"/>
<dbReference type="PDBsum" id="7RQC"/>
<dbReference type="PDBsum" id="7RQD"/>
<dbReference type="PDBsum" id="7RQE"/>
<dbReference type="PDBsum" id="7U2H"/>
<dbReference type="PDBsum" id="7U2I"/>
<dbReference type="PDBsum" id="7U2J"/>
<dbReference type="PDBsum" id="7V2L"/>
<dbReference type="PDBsum" id="7V2M"/>
<dbReference type="PDBsum" id="7V2N"/>
<dbReference type="PDBsum" id="7V2O"/>
<dbReference type="PDBsum" id="7V2P"/>
<dbReference type="PDBsum" id="7V2Q"/>
<dbReference type="PDBsum" id="8CVJ"/>
<dbReference type="PDBsum" id="8CVK"/>
<dbReference type="PDBsum" id="8CVL"/>
<dbReference type="PDBsum" id="8EKB"/>
<dbReference type="PDBsum" id="8EV6"/>
<dbReference type="PDBsum" id="8EV7"/>
<dbReference type="PDBsum" id="8FC1"/>
<dbReference type="PDBsum" id="8FC2"/>
<dbReference type="PDBsum" id="8FC3"/>
<dbReference type="PDBsum" id="8FC4"/>
<dbReference type="PDBsum" id="8FC5"/>
<dbReference type="PDBsum" id="8FC6"/>
<dbReference type="PDBsum" id="8FOM"/>
<dbReference type="PDBsum" id="8FON"/>
<dbReference type="PDBsum" id="8G29"/>
<dbReference type="PDBsum" id="8G2A"/>
<dbReference type="PDBsum" id="8G2B"/>
<dbReference type="PDBsum" id="8G2C"/>
<dbReference type="PDBsum" id="8G2D"/>
<dbReference type="PDBsum" id="8T8B"/>
<dbReference type="PDBsum" id="8T8C"/>
<dbReference type="PDBsum" id="8UD6"/>
<dbReference type="PDBsum" id="8UD7"/>
<dbReference type="PDBsum" id="8UD8"/>
<dbReference type="PDBsum" id="8UVR"/>
<dbReference type="PDBsum" id="8UVS"/>
<dbReference type="PDBsum" id="8VTU"/>
<dbReference type="PDBsum" id="8VTV"/>
<dbReference type="PDBsum" id="8VTW"/>
<dbReference type="PDBsum" id="8VTX"/>
<dbReference type="PDBsum" id="8VTY"/>
<dbReference type="PDBsum" id="9B00"/>
<dbReference type="PDBsum" id="9D0J"/>
<dbReference type="PDBsum" id="9D7R"/>
<dbReference type="PDBsum" id="9D7S"/>
<dbReference type="PDBsum" id="9D7T"/>
<dbReference type="PDBsum" id="9DFC"/>
<dbReference type="PDBsum" id="9DFD"/>
<dbReference type="PDBsum" id="9DFE"/>
<dbReference type="EMDB" id="EMD-0101"/>
<dbReference type="EMDB" id="EMD-0104"/>
<dbReference type="EMDB" id="EMD-0105"/>
<dbReference type="EMDB" id="EMD-31655"/>
<dbReference type="EMDB" id="EMD-31656"/>
<dbReference type="EMDB" id="EMD-31657"/>
<dbReference type="EMDB" id="EMD-31658"/>
<dbReference type="EMDB" id="EMD-31659"/>
<dbReference type="EMDB" id="EMD-31660"/>
<dbReference type="EMDB" id="EMD-3852"/>
<dbReference type="EMDB" id="EMD-4077"/>
<dbReference type="EMDB" id="EMD-4475"/>
<dbReference type="EMDB" id="EMD-6934"/>
<dbReference type="SMR" id="P0DOY6"/>
<dbReference type="IntAct" id="P0DOY6">
    <property type="interactions" value="10"/>
</dbReference>
<dbReference type="DrugBank" id="DB08185">
    <property type="generic name" value="2-METHYLTHIO-N6-ISOPENTENYL-ADENOSINE-5'-MONOPHOSPHATE"/>
</dbReference>
<dbReference type="EnsemblBacteria" id="BAD71502">
    <property type="protein sequence ID" value="BAD71502"/>
    <property type="gene ID" value="BAD71502"/>
</dbReference>
<dbReference type="GeneID" id="3169802"/>
<dbReference type="KEGG" id="ttj:TTHA1679"/>
<dbReference type="eggNOG" id="COG0199">
    <property type="taxonomic scope" value="Bacteria"/>
</dbReference>
<dbReference type="HOGENOM" id="CLU_139869_3_0_0"/>
<dbReference type="EvolutionaryTrace" id="P0DOY6"/>
<dbReference type="Proteomes" id="UP000000532">
    <property type="component" value="Chromosome"/>
</dbReference>
<dbReference type="GO" id="GO:0005737">
    <property type="term" value="C:cytoplasm"/>
    <property type="evidence" value="ECO:0007669"/>
    <property type="project" value="UniProtKB-ARBA"/>
</dbReference>
<dbReference type="GO" id="GO:0015935">
    <property type="term" value="C:small ribosomal subunit"/>
    <property type="evidence" value="ECO:0007669"/>
    <property type="project" value="TreeGrafter"/>
</dbReference>
<dbReference type="GO" id="GO:0019843">
    <property type="term" value="F:rRNA binding"/>
    <property type="evidence" value="ECO:0007669"/>
    <property type="project" value="UniProtKB-UniRule"/>
</dbReference>
<dbReference type="GO" id="GO:0003735">
    <property type="term" value="F:structural constituent of ribosome"/>
    <property type="evidence" value="ECO:0007669"/>
    <property type="project" value="InterPro"/>
</dbReference>
<dbReference type="GO" id="GO:0008270">
    <property type="term" value="F:zinc ion binding"/>
    <property type="evidence" value="ECO:0007669"/>
    <property type="project" value="UniProtKB-UniRule"/>
</dbReference>
<dbReference type="GO" id="GO:0006412">
    <property type="term" value="P:translation"/>
    <property type="evidence" value="ECO:0007669"/>
    <property type="project" value="UniProtKB-UniRule"/>
</dbReference>
<dbReference type="FunFam" id="4.10.830.10:FF:000001">
    <property type="entry name" value="30S ribosomal protein S14 type Z"/>
    <property type="match status" value="1"/>
</dbReference>
<dbReference type="Gene3D" id="4.10.830.10">
    <property type="entry name" value="30s Ribosomal Protein S14, Chain N"/>
    <property type="match status" value="1"/>
</dbReference>
<dbReference type="HAMAP" id="MF_01364_B">
    <property type="entry name" value="Ribosomal_uS14_2_B"/>
    <property type="match status" value="1"/>
</dbReference>
<dbReference type="InterPro" id="IPR001209">
    <property type="entry name" value="Ribosomal_uS14"/>
</dbReference>
<dbReference type="InterPro" id="IPR023053">
    <property type="entry name" value="Ribosomal_uS14_bact"/>
</dbReference>
<dbReference type="InterPro" id="IPR018271">
    <property type="entry name" value="Ribosomal_uS14_CS"/>
</dbReference>
<dbReference type="InterPro" id="IPR043140">
    <property type="entry name" value="Ribosomal_uS14_sf"/>
</dbReference>
<dbReference type="NCBIfam" id="NF005974">
    <property type="entry name" value="PRK08061.1"/>
    <property type="match status" value="1"/>
</dbReference>
<dbReference type="PANTHER" id="PTHR19836">
    <property type="entry name" value="30S RIBOSOMAL PROTEIN S14"/>
    <property type="match status" value="1"/>
</dbReference>
<dbReference type="PANTHER" id="PTHR19836:SF19">
    <property type="entry name" value="SMALL RIBOSOMAL SUBUNIT PROTEIN US14M"/>
    <property type="match status" value="1"/>
</dbReference>
<dbReference type="Pfam" id="PF00253">
    <property type="entry name" value="Ribosomal_S14"/>
    <property type="match status" value="1"/>
</dbReference>
<dbReference type="SUPFAM" id="SSF57716">
    <property type="entry name" value="Glucocorticoid receptor-like (DNA-binding domain)"/>
    <property type="match status" value="1"/>
</dbReference>
<dbReference type="PROSITE" id="PS00527">
    <property type="entry name" value="RIBOSOMAL_S14"/>
    <property type="match status" value="1"/>
</dbReference>
<gene>
    <name type="primary">rpsZ</name>
    <name type="synonym">rpsN</name>
    <name type="ordered locus">TTHA1679</name>
</gene>
<organism>
    <name type="scientific">Thermus thermophilus (strain ATCC 27634 / DSM 579 / HB8)</name>
    <dbReference type="NCBI Taxonomy" id="300852"/>
    <lineage>
        <taxon>Bacteria</taxon>
        <taxon>Thermotogati</taxon>
        <taxon>Deinococcota</taxon>
        <taxon>Deinococci</taxon>
        <taxon>Thermales</taxon>
        <taxon>Thermaceae</taxon>
        <taxon>Thermus</taxon>
    </lineage>
</organism>
<feature type="initiator methionine" description="Removed" evidence="4 5">
    <location>
        <position position="1"/>
    </location>
</feature>
<feature type="chain" id="PRO_0000130955" description="Small ribosomal subunit protein uS14">
    <location>
        <begin position="2"/>
        <end position="61"/>
    </location>
</feature>
<feature type="binding site" evidence="2">
    <location>
        <position position="24"/>
    </location>
    <ligand>
        <name>Zn(2+)</name>
        <dbReference type="ChEBI" id="CHEBI:29105"/>
    </ligand>
</feature>
<feature type="binding site" evidence="2">
    <location>
        <position position="27"/>
    </location>
    <ligand>
        <name>Zn(2+)</name>
        <dbReference type="ChEBI" id="CHEBI:29105"/>
    </ligand>
</feature>
<feature type="binding site" evidence="2">
    <location>
        <position position="40"/>
    </location>
    <ligand>
        <name>Zn(2+)</name>
        <dbReference type="ChEBI" id="CHEBI:29105"/>
    </ligand>
</feature>
<feature type="binding site" evidence="2">
    <location>
        <position position="43"/>
    </location>
    <ligand>
        <name>Zn(2+)</name>
        <dbReference type="ChEBI" id="CHEBI:29105"/>
    </ligand>
</feature>
<feature type="helix" evidence="11">
    <location>
        <begin position="4"/>
        <end position="9"/>
    </location>
</feature>
<feature type="strand" evidence="10">
    <location>
        <begin position="10"/>
        <end position="12"/>
    </location>
</feature>
<feature type="helix" evidence="11">
    <location>
        <begin position="17"/>
        <end position="19"/>
    </location>
</feature>
<feature type="turn" evidence="11">
    <location>
        <begin position="25"/>
        <end position="27"/>
    </location>
</feature>
<feature type="strand" evidence="9">
    <location>
        <begin position="31"/>
        <end position="33"/>
    </location>
</feature>
<feature type="turn" evidence="11">
    <location>
        <begin position="35"/>
        <end position="37"/>
    </location>
</feature>
<feature type="strand" evidence="12">
    <location>
        <begin position="38"/>
        <end position="40"/>
    </location>
</feature>
<feature type="helix" evidence="11">
    <location>
        <begin position="41"/>
        <end position="50"/>
    </location>
</feature>
<feature type="strand" evidence="11">
    <location>
        <begin position="53"/>
        <end position="55"/>
    </location>
</feature>
<feature type="strand" evidence="8">
    <location>
        <begin position="56"/>
        <end position="58"/>
    </location>
</feature>
<sequence>MARKALIEKAKRTPKFKVRAYTRCVRCGRARSVYRFFGLCRICLRELAHKGQLPGVRKASW</sequence>
<comment type="function">
    <text evidence="1">Required for the assembly of 30S particles and may also be responsible for determining the conformation of the 16S rRNA at the A site (By similarity). Binds 16S rRNA in center of the 30S subunit head.</text>
</comment>
<comment type="cofactor">
    <cofactor evidence="2 6">
        <name>Zn(2+)</name>
        <dbReference type="ChEBI" id="CHEBI:29105"/>
    </cofactor>
    <text evidence="2 6">Binds 1 zinc ion per subunit.</text>
</comment>
<comment type="subunit">
    <text>Part of the 30S ribosomal subunit. Forms a tight complex with proteins S3 and S10, which cover it.</text>
</comment>
<comment type="mass spectrometry"/>
<comment type="similarity">
    <text evidence="7">Belongs to the universal ribosomal protein uS14 family. Zinc-binding uS14 subfamily.</text>
</comment>
<proteinExistence type="evidence at protein level"/>
<reference key="1">
    <citation type="journal article" date="1995" name="Biol. Chem. Hoppe-Seyler">
        <title>Studies on S14 protein from Thermus thermophilus possessing zinc finger-like motifs.</title>
        <authorList>
            <person name="Tsiboli P."/>
            <person name="Choli T."/>
        </authorList>
    </citation>
    <scope>NUCLEOTIDE SEQUENCE [GENOMIC DNA]</scope>
    <scope>PROTEIN SEQUENCE OF 2-61</scope>
</reference>
<reference key="2">
    <citation type="submission" date="2004-11" db="EMBL/GenBank/DDBJ databases">
        <title>Complete genome sequence of Thermus thermophilus HB8.</title>
        <authorList>
            <person name="Masui R."/>
            <person name="Kurokawa K."/>
            <person name="Nakagawa N."/>
            <person name="Tokunaga F."/>
            <person name="Koyama Y."/>
            <person name="Shibata T."/>
            <person name="Oshima T."/>
            <person name="Yokoyama S."/>
            <person name="Yasunaga T."/>
            <person name="Kuramitsu S."/>
        </authorList>
    </citation>
    <scope>NUCLEOTIDE SEQUENCE [LARGE SCALE GENOMIC DNA]</scope>
    <source>
        <strain>ATCC 27634 / DSM 579 / HB8</strain>
    </source>
</reference>
<reference key="3">
    <citation type="journal article" date="1994" name="Eur. J. Biochem.">
        <title>Purification and characterization of the 30S ribosomal proteins from the bacterium Thermus thermophilus.</title>
        <authorList>
            <person name="Tsiboli P."/>
            <person name="Herfurth E."/>
            <person name="Choli T."/>
        </authorList>
    </citation>
    <scope>PROTEIN SEQUENCE OF 2-23</scope>
</reference>
<reference key="4">
    <citation type="journal article" date="1998" name="Eur. J. Biochem.">
        <title>Studies on the Zn-containing S14 ribosomal protein from Thermus thermophilus.</title>
        <authorList>
            <person name="Tsiboli P."/>
            <person name="Triantafillidou D."/>
            <person name="Franceschi F."/>
            <person name="Choli-Papadopoulou T."/>
        </authorList>
    </citation>
    <scope>COFACTOR</scope>
</reference>
<reference key="5">
    <citation type="journal article" date="2005" name="Proteomics">
        <title>Extending ribosomal protein identifications to unsequenced bacterial strains using matrix-assisted laser desorption/ionization mass spectrometry.</title>
        <authorList>
            <person name="Suh M.-J."/>
            <person name="Hamburg D.M."/>
            <person name="Gregory S.T."/>
            <person name="Dahlberg A.E."/>
            <person name="Limbach P.A."/>
        </authorList>
    </citation>
    <scope>MASS SPECTROMETRY</scope>
    <source>
        <strain>ATCC 27634 / DSM 579 / HB8</strain>
    </source>
</reference>
<reference key="6">
    <citation type="journal article" date="2000" name="Nature">
        <title>Structure of the 30S ribosomal subunit.</title>
        <authorList>
            <person name="Wimberly B.T."/>
            <person name="Brodersen D.E."/>
            <person name="Clemons W.M. Jr."/>
            <person name="Morgan-Warren R.J."/>
            <person name="Carter A.P."/>
            <person name="Vonrhein C."/>
            <person name="Hartsch T."/>
            <person name="Ramakrishnan V."/>
        </authorList>
    </citation>
    <scope>X-RAY CRYSTALLOGRAPHY (3.05 ANGSTROMS) OF THE 30S SUBUNIT</scope>
</reference>
<reference key="7">
    <citation type="journal article" date="2000" name="Cell">
        <title>Structure of functionally activated small ribosomal subunit at 3.3 A resolution.</title>
        <authorList>
            <person name="Schluenzen F."/>
            <person name="Tocilj A."/>
            <person name="Zarivach R."/>
            <person name="Harms J."/>
            <person name="Gluehmann M."/>
            <person name="Janell D."/>
            <person name="Bashan A."/>
            <person name="Bartels H."/>
            <person name="Agmon I."/>
            <person name="Franceschi F."/>
            <person name="Yonath A."/>
        </authorList>
    </citation>
    <scope>X-RAY CRYSTALLOGRAPHY (3.3 ANGSTROMS) OF THE 30S SUBUNIT</scope>
</reference>
<reference key="8">
    <citation type="journal article" date="2000" name="Cell">
        <title>The structural basis for the action of the antibiotics tetracycline, pactamycin, and hygromycin B on the 30S ribosomal subunit.</title>
        <authorList>
            <person name="Brodersen D.E."/>
            <person name="Clemons W.M. Jr."/>
            <person name="Carter A.P."/>
            <person name="Morgan-Warren R.J."/>
            <person name="Wimberly B.T."/>
            <person name="Ramakrishnan V."/>
        </authorList>
    </citation>
    <scope>X-RAY CRYSTALLOGRAPHY (3.3 ANGSTROMS) OF THE 30S SUBUNIT</scope>
</reference>
<reference key="9">
    <citation type="journal article" date="2000" name="Nature">
        <title>Functional insights from the structure of the 30S ribosomal subunit and its interactions with antibiotics.</title>
        <authorList>
            <person name="Carter A.P."/>
            <person name="Clemons W.M. Jr."/>
            <person name="Brodersen D.E."/>
            <person name="Morgan-Warren R.J."/>
            <person name="Wimberly B.T."/>
            <person name="Ramakrishnan V."/>
        </authorList>
    </citation>
    <scope>X-RAY CRYSTALLOGRAPHY (3.0 ANGSTROMS) OF THE 30S SUBUNIT</scope>
</reference>
<reference key="10">
    <citation type="journal article" date="2001" name="Cell">
        <title>The path of messenger RNA through the ribosome.</title>
        <authorList>
            <person name="Yusupova G.Z."/>
            <person name="Yusupov M.M."/>
            <person name="Cate J.H.D."/>
            <person name="Noller H.F."/>
        </authorList>
    </citation>
    <scope>X-RAY CRYSTALLOGRAPHY (5.0 ANGSTROMS) OF THE RIBOSOME</scope>
</reference>
<reference key="11">
    <citation type="journal article" date="2001" name="EMBO J.">
        <title>Crystal structures of complexes of the small ribosomal subunit with tetracycline, edeine and IF3.</title>
        <authorList>
            <person name="Pioletti M."/>
            <person name="Schluenzen F."/>
            <person name="Harms J."/>
            <person name="Zarivach R."/>
            <person name="Gluehmann M."/>
            <person name="Avila H."/>
            <person name="Bashan A."/>
            <person name="Bartels H."/>
            <person name="Auerbach T."/>
            <person name="Jacobi C."/>
            <person name="Hartsch T."/>
            <person name="Yonath A."/>
            <person name="Franceschi F."/>
        </authorList>
    </citation>
    <scope>X-RAY CRYSTALLOGRAPHY (3.2 ANGSTROMS) OF THE 30S SUBUNIT</scope>
</reference>
<reference key="12">
    <citation type="journal article" date="2001" name="Science">
        <title>Crystal structure of an initiation factor bound to the 30S ribosomal subunit.</title>
        <authorList>
            <person name="Carter A.P."/>
            <person name="Clemons W.M. Jr."/>
            <person name="Brodersen D.E."/>
            <person name="Morgan-Warren R.J."/>
            <person name="Hartsch T."/>
            <person name="Wimberly B.T."/>
            <person name="Ramakrishnan V."/>
        </authorList>
    </citation>
    <scope>X-RAY CRYSTALLOGRAPHY (3.2 ANGSTROMS) OF THE 30S SUBUNIT</scope>
</reference>
<reference key="13">
    <citation type="journal article" date="2001" name="Science">
        <title>Crystal structure of the ribosome at 5.5 A resolution.</title>
        <authorList>
            <person name="Yusupov M.M."/>
            <person name="Yusupova G.Z."/>
            <person name="Baucom A."/>
            <person name="Lieberman K."/>
            <person name="Earnest T.N."/>
            <person name="Cate J.H.D."/>
            <person name="Noller H.F."/>
        </authorList>
    </citation>
    <scope>X-RAY CRYSTALLOGRAPHY (5.5 ANGSTROMS) OF THE RIBOSOME</scope>
</reference>
<reference key="14">
    <citation type="journal article" date="2001" name="Science">
        <title>Recognition of cognate transfer RNA by the 30S ribosomal subunit.</title>
        <authorList>
            <person name="Ogle J.M."/>
            <person name="Brodersen D.E."/>
            <person name="Clemons W.M. Jr."/>
            <person name="Tarry M.J."/>
            <person name="Carter A.P."/>
            <person name="Ramakrishnan V."/>
        </authorList>
    </citation>
    <scope>X-RAY CRYSTALLOGRAPHY (3.11 ANGSTROMS) OF THE 30S SUBUNIT</scope>
</reference>
<reference key="15">
    <citation type="journal article" date="2002" name="J. Mol. Biol.">
        <title>Crystal structure of the 30S ribosomal subunit from Thermus thermophilus: structure of the proteins and their interactions with 16S RNA.</title>
        <authorList>
            <person name="Brodersen D.E."/>
            <person name="Clemons W.M. Jr."/>
            <person name="Carter A.P."/>
            <person name="Wimberly B.T."/>
            <person name="Ramakrishnan V."/>
        </authorList>
    </citation>
    <scope>X-RAY CRYSTALLOGRAPHY (3.05 ANGSTROMS) OF THE 30S SUBUNIT</scope>
    <scope>COFACTOR</scope>
</reference>
<reference key="16">
    <citation type="journal article" date="2005" name="Cell">
        <title>Crystal structures of the ribosome in complex with release factors RF1 and RF2 bound to a cognate stop codon.</title>
        <authorList>
            <person name="Petry S."/>
            <person name="Brodersen D.E."/>
            <person name="Murphy F.V."/>
            <person name="Dunham C.M."/>
            <person name="Selmer M."/>
            <person name="Tarry M.J."/>
            <person name="Kelley A.C."/>
            <person name="Ramakrishnan V."/>
        </authorList>
    </citation>
    <scope>X-RAY CRYSTALLOGRAPHY (5.90 ANGSTROMS) OF 70S RIBOSOME IN COMPLEX WITH RF1 OR RF2</scope>
    <scope>SUBUNIT</scope>
</reference>
<reference key="17">
    <citation type="journal article" date="2008" name="Science">
        <title>Insights into translational termination from the structure of RF2 bound to the ribosome.</title>
        <authorList>
            <person name="Weixlbaumer A."/>
            <person name="Jin H."/>
            <person name="Neubauer C."/>
            <person name="Voorhees R.M."/>
            <person name="Petry S."/>
            <person name="Kelley A.C."/>
            <person name="Ramakrishnan V."/>
        </authorList>
    </citation>
    <scope>X-RAY CRYSTALLOGRAPHY (3.45 ANGSTROMS) OF 70S RIBOSOME IN COMPLEX WITH RF2</scope>
    <scope>SUBUNIT</scope>
</reference>
<reference key="18">
    <citation type="journal article" date="2010" name="Proc. Natl. Acad. Sci. U.S.A.">
        <title>Structure of the 70S ribosome bound to release factor 2 and a substrate analog provides insights into catalysis of peptide release.</title>
        <authorList>
            <person name="Jin H."/>
            <person name="Kelley A.C."/>
            <person name="Loakes D."/>
            <person name="Ramakrishnan V."/>
        </authorList>
    </citation>
    <scope>X-RAY CRYSTALLOGRAPHY (3.10 ANGSTROMS) OF 70S RIBOSOME IN COMPLEX WITH RF2</scope>
    <scope>SUBUNIT</scope>
</reference>
<accession>P0DOY6</accession>
<accession>Q5SHQ1</accession>